<accession>P11717</accession>
<accession>Q7Z7G9</accession>
<accession>Q96PT5</accession>
<sequence length="2491" mass="274375">MGAAAGRSPHLGPAPARRPQRSLLLLQLLLLVAAPGSTQAQAAPFPELCSYTWEAVDTKNNVLYKINICGSVDIVQCGPSSAVCMHDLKTRTYHSVGDSVLRSATRSLLEFNTTVSCDQQGTNHRVQSSIAFLCGKTLGTPEFVTATECVHYFEWRTTAACKKDIFKANKEVPCYVFDEELRKHDLNPLIKLSGAYLVDDSDPDTSLFINVCRDIDTLRDPGSQLRACPPGTAACLVRGHQAFDVGQPRDGLKLVRKDRLVLSYVREEAGKLDFCDGHSPAVTITFVCPSERREGTIPKLTAKSNCRYEIEWITEYACHRDYLESKTCSLSGEQQDVSIDLTPLAQSGGSSYISDGKEYLFYLNVCGETEIQFCNKKQAAVCQVKKSDTSQVKAAGRYHNQTLRYSDGDLTLIYFGGDECSSGFQRMSVINFECNKTAGNDGKGTPVFTGEVDCTYFFTWDTEYACVKEKEDLLCGATDGKKRYDLSALVRHAEPEQNWEAVDGSQTETEKKHFFINICHRVLQEGKARGCPEDAAVCAVDKNGSKNLGKFISSPMKEKGNIQLSYSDGDDCGHGKKIKTNITLVCKPGDLESAPVLRTSGEGGCFYEFEWHTAAACVLSKTEGENCTVFDSQAGFSFDLSPLTKKNGAYKVETKKYDFYINVCGPVSVSPCQPDSGACQVAKSDEKTWNLGLSNAKLSYYDGMIQLNYRGGTPYNNERHTPRATLITFLCDRDAGVGFPEYQEEDNSTYNFRWYTSYACPEEPLECVVTDPSTLEQYDLSSLAKSEGGLGGNWYAMDNSGEHVTWRKYYINVCRPLNPVPGCNRYASACQMKYEKDQGSFTEVVSISNLGMAKTGPVVEDSGSLLLEYVNGSACTTSDGRQTTYTTRIHLVCSRGRLNSHPIFSLNWECVVSFLWNTEAACPIQTTTDTDQACSIRDPNSGFVFNLNPLNSSQGYNVSGIGKIFMFNVCGTMPVCGTILGKPASGCEAETQTEELKNWKPARPVGIEKSLQLSTEGFITLTYKGPLSAKGTADAFIVRFVCNDDVYSGPLKFLHQDIDSGQGIRNTYFEFETALACVPSPVDCQVTDLAGNEYDLTGLSTVRKPWTAVDTSVDGRKRTFYLSVCNPLPYIPGCQGSAVGSCLVSEGNSWNLGVVQMSPQAAANGSLSIMYVNGDKCGNQRFSTRITFECAQISGSPAFQLQDGCEYVFIWRTVEACPVVRVEGDNCEVKDPRHGNLYDLKPLGLNDTIVSAGEYTYYFRVCGKLSSDVCPTSDKSKVVSSCQEKREPQGFHKVAGLLTQKLTYENGLLKMNFTGGDTCHKVYQRSTAIFFYCDRGTQRPVFLKETSDCSYLFEWRTQYACPPFDLTECSFKDGAGNSFDLSSLSRYSDNWEAITGTGDPEHYLINVCKSLAPQAGTEPCPPEAAACLLGGSKPVNLGRVRDGPQWRDGIIVLKYVDGDLCPDGIRKKSTTIRFTCSESQVNSRPMFISAVEDCEYTFAWPTATACPMKSNEHDDCQVTNPSTGHLFDLSSLSGRAGFTAAYSEKGLVYMSICGENENCPPGVGACFGQTRISVGKANKRLRYVDQVLQLVYKDGSPCPSKSGLSYKSVISFVCRPEARPTNRPMLISLDKQTCTLFFSWHTPLACEQATECSVRNGSSIVDLSPLIHRTGGYEAYDESEDDASDTNPDFYINICQPLNPMHGVPCPAGAAVCKVPIDGPPIDIGRVAGPPILNPIANEIYLNFESSTPCLADKHFNYTSLIAFHCKRGVSMGTPKLLRTSECDFVFEWETPVVCPDEVRMDGCTLTDEQLLYSFNLSSLSTSTFKVTRDSRTYSVGVCTFAVGPEQGGCKDGGVCLLSGTKGASFGRLQSMKLDYRHQDEAVVLSYVNGDRCPPETDDGVPCVFPFIFNGKSYEECIIESRAKLWCSTTADYDRDHEWGFCRHSNSYRTSSIIFKCDEDEDIGRPQVFSEVRGCDVTFEWKTKVVCPPKKLECKFVQKHKTYDLRLLSSLTGSWSLVHNGVSYYINLCQKIYKGPLGCSERASICRRTTTGDVQVLGLVHTQKLGVIGDKVVVTYSKGYPCGGNKTASSVIELTCTKTVGRPAFKRFDIDSCTYYFSWDSRAACAVKPQEVQMVNGTITNPINGKSFSLGDIYFKLFRASGDMRTNGDNYLYEIQLSSITSSRNPACSGANICQVKPNDQHFSRKVGTSDKTKYYLQDGDLDVVFASSSKCGKDKTKSVSSTIFFHCDPLVEDGIPEFSHETADCQYLFSWYTSAVCPLGVGFDSENPGDDGQMHKGLSERSQAVGAVLSLLLVALTCCLLALLLYKKERRETVISKLTTCCRRSSNVSYKYSKVNKEEETDENETEWLMEEIQLPPPRQGKEGQENGHITTKSVKALSSLHGDDQDSEDEVLTIPEVKVHSGRGAGAESSHPVRNAQSNALQEREDDRVGLVRGEKARKGKSSSAQQKTVSSTKLVSFHDDSDEDLLHI</sequence>
<evidence type="ECO:0000250" key="1"/>
<evidence type="ECO:0000250" key="2">
    <source>
        <dbReference type="UniProtKB" id="Q07113"/>
    </source>
</evidence>
<evidence type="ECO:0000255" key="3"/>
<evidence type="ECO:0000255" key="4">
    <source>
        <dbReference type="PROSITE-ProRule" id="PRU00479"/>
    </source>
</evidence>
<evidence type="ECO:0000255" key="5">
    <source>
        <dbReference type="PROSITE-ProRule" id="PRU01262"/>
    </source>
</evidence>
<evidence type="ECO:0000256" key="6">
    <source>
        <dbReference type="SAM" id="MobiDB-lite"/>
    </source>
</evidence>
<evidence type="ECO:0000269" key="7">
    <source>
    </source>
</evidence>
<evidence type="ECO:0000269" key="8">
    <source>
    </source>
</evidence>
<evidence type="ECO:0000269" key="9">
    <source>
    </source>
</evidence>
<evidence type="ECO:0000269" key="10">
    <source>
    </source>
</evidence>
<evidence type="ECO:0000269" key="11">
    <source>
    </source>
</evidence>
<evidence type="ECO:0000269" key="12">
    <source>
    </source>
</evidence>
<evidence type="ECO:0000269" key="13">
    <source>
    </source>
</evidence>
<evidence type="ECO:0000269" key="14">
    <source>
    </source>
</evidence>
<evidence type="ECO:0000269" key="15">
    <source ref="3"/>
</evidence>
<evidence type="ECO:0000269" key="16">
    <source ref="5"/>
</evidence>
<evidence type="ECO:0000305" key="17"/>
<evidence type="ECO:0000305" key="18">
    <source>
    </source>
</evidence>
<evidence type="ECO:0007744" key="19">
    <source>
    </source>
</evidence>
<evidence type="ECO:0007744" key="20">
    <source>
    </source>
</evidence>
<evidence type="ECO:0007744" key="21">
    <source>
    </source>
</evidence>
<evidence type="ECO:0007744" key="22">
    <source>
    </source>
</evidence>
<evidence type="ECO:0007744" key="23">
    <source>
    </source>
</evidence>
<evidence type="ECO:0007744" key="24">
    <source>
    </source>
</evidence>
<evidence type="ECO:0007744" key="25">
    <source>
    </source>
</evidence>
<evidence type="ECO:0007744" key="26">
    <source>
    </source>
</evidence>
<evidence type="ECO:0007744" key="27">
    <source>
    </source>
</evidence>
<evidence type="ECO:0007744" key="28">
    <source>
    </source>
</evidence>
<evidence type="ECO:0007744" key="29">
    <source>
    </source>
</evidence>
<evidence type="ECO:0007744" key="30">
    <source>
    </source>
</evidence>
<evidence type="ECO:0007744" key="31">
    <source>
    </source>
</evidence>
<evidence type="ECO:0007744" key="32">
    <source>
    </source>
</evidence>
<evidence type="ECO:0007829" key="33">
    <source>
        <dbReference type="PDB" id="1GP0"/>
    </source>
</evidence>
<evidence type="ECO:0007829" key="34">
    <source>
        <dbReference type="PDB" id="2CNJ"/>
    </source>
</evidence>
<evidence type="ECO:0007829" key="35">
    <source>
        <dbReference type="PDB" id="2L2A"/>
    </source>
</evidence>
<evidence type="ECO:0007829" key="36">
    <source>
        <dbReference type="PDB" id="2V5N"/>
    </source>
</evidence>
<evidence type="ECO:0007829" key="37">
    <source>
        <dbReference type="PDB" id="2V5O"/>
    </source>
</evidence>
<evidence type="ECO:0007829" key="38">
    <source>
        <dbReference type="PDB" id="5IEI"/>
    </source>
</evidence>
<evidence type="ECO:0007829" key="39">
    <source>
        <dbReference type="PDB" id="6N5X"/>
    </source>
</evidence>
<evidence type="ECO:0007829" key="40">
    <source>
        <dbReference type="PDB" id="6P8I"/>
    </source>
</evidence>
<evidence type="ECO:0007829" key="41">
    <source>
        <dbReference type="PDB" id="6V02"/>
    </source>
</evidence>
<evidence type="ECO:0007829" key="42">
    <source>
        <dbReference type="PDB" id="6Z30"/>
    </source>
</evidence>
<evidence type="ECO:0007829" key="43">
    <source>
        <dbReference type="PDB" id="6Z31"/>
    </source>
</evidence>
<evidence type="ECO:0007829" key="44">
    <source>
        <dbReference type="PDB" id="6Z32"/>
    </source>
</evidence>
<gene>
    <name type="primary">IGF2R</name>
    <name type="synonym">MPRI</name>
</gene>
<name>MPRI_HUMAN</name>
<proteinExistence type="evidence at protein level"/>
<dbReference type="EMBL" id="Y00285">
    <property type="protein sequence ID" value="CAA68395.1"/>
    <property type="molecule type" value="mRNA"/>
</dbReference>
<dbReference type="EMBL" id="J03528">
    <property type="protein sequence ID" value="AAA59866.1"/>
    <property type="molecule type" value="mRNA"/>
</dbReference>
<dbReference type="EMBL" id="AF109291">
    <property type="protein sequence ID" value="AAF16870.1"/>
    <property type="molecule type" value="Genomic_DNA"/>
</dbReference>
<dbReference type="EMBL" id="AF109244">
    <property type="protein sequence ID" value="AAF16870.1"/>
    <property type="status" value="JOINED"/>
    <property type="molecule type" value="Genomic_DNA"/>
</dbReference>
<dbReference type="EMBL" id="AF109245">
    <property type="protein sequence ID" value="AAF16870.1"/>
    <property type="status" value="JOINED"/>
    <property type="molecule type" value="Genomic_DNA"/>
</dbReference>
<dbReference type="EMBL" id="AF109246">
    <property type="protein sequence ID" value="AAF16870.1"/>
    <property type="status" value="JOINED"/>
    <property type="molecule type" value="Genomic_DNA"/>
</dbReference>
<dbReference type="EMBL" id="AF109247">
    <property type="protein sequence ID" value="AAF16870.1"/>
    <property type="status" value="JOINED"/>
    <property type="molecule type" value="Genomic_DNA"/>
</dbReference>
<dbReference type="EMBL" id="AF109248">
    <property type="protein sequence ID" value="AAF16870.1"/>
    <property type="status" value="JOINED"/>
    <property type="molecule type" value="Genomic_DNA"/>
</dbReference>
<dbReference type="EMBL" id="AF109249">
    <property type="protein sequence ID" value="AAF16870.1"/>
    <property type="status" value="JOINED"/>
    <property type="molecule type" value="Genomic_DNA"/>
</dbReference>
<dbReference type="EMBL" id="AF109250">
    <property type="protein sequence ID" value="AAF16870.1"/>
    <property type="status" value="JOINED"/>
    <property type="molecule type" value="Genomic_DNA"/>
</dbReference>
<dbReference type="EMBL" id="AF109251">
    <property type="protein sequence ID" value="AAF16870.1"/>
    <property type="status" value="JOINED"/>
    <property type="molecule type" value="Genomic_DNA"/>
</dbReference>
<dbReference type="EMBL" id="AF109252">
    <property type="protein sequence ID" value="AAF16870.1"/>
    <property type="status" value="JOINED"/>
    <property type="molecule type" value="Genomic_DNA"/>
</dbReference>
<dbReference type="EMBL" id="AF109253">
    <property type="protein sequence ID" value="AAF16870.1"/>
    <property type="status" value="JOINED"/>
    <property type="molecule type" value="Genomic_DNA"/>
</dbReference>
<dbReference type="EMBL" id="AF109254">
    <property type="protein sequence ID" value="AAF16870.1"/>
    <property type="status" value="JOINED"/>
    <property type="molecule type" value="Genomic_DNA"/>
</dbReference>
<dbReference type="EMBL" id="AF109255">
    <property type="protein sequence ID" value="AAF16870.1"/>
    <property type="status" value="JOINED"/>
    <property type="molecule type" value="Genomic_DNA"/>
</dbReference>
<dbReference type="EMBL" id="AF109256">
    <property type="protein sequence ID" value="AAF16870.1"/>
    <property type="status" value="JOINED"/>
    <property type="molecule type" value="Genomic_DNA"/>
</dbReference>
<dbReference type="EMBL" id="AF109257">
    <property type="protein sequence ID" value="AAF16870.1"/>
    <property type="status" value="JOINED"/>
    <property type="molecule type" value="Genomic_DNA"/>
</dbReference>
<dbReference type="EMBL" id="AF109258">
    <property type="protein sequence ID" value="AAF16870.1"/>
    <property type="status" value="JOINED"/>
    <property type="molecule type" value="Genomic_DNA"/>
</dbReference>
<dbReference type="EMBL" id="AF109259">
    <property type="protein sequence ID" value="AAF16870.1"/>
    <property type="status" value="JOINED"/>
    <property type="molecule type" value="Genomic_DNA"/>
</dbReference>
<dbReference type="EMBL" id="AF109260">
    <property type="protein sequence ID" value="AAF16870.1"/>
    <property type="status" value="JOINED"/>
    <property type="molecule type" value="Genomic_DNA"/>
</dbReference>
<dbReference type="EMBL" id="AF109261">
    <property type="protein sequence ID" value="AAF16870.1"/>
    <property type="status" value="JOINED"/>
    <property type="molecule type" value="Genomic_DNA"/>
</dbReference>
<dbReference type="EMBL" id="AF109262">
    <property type="protein sequence ID" value="AAF16870.1"/>
    <property type="status" value="JOINED"/>
    <property type="molecule type" value="Genomic_DNA"/>
</dbReference>
<dbReference type="EMBL" id="AF109263">
    <property type="protein sequence ID" value="AAF16870.1"/>
    <property type="status" value="JOINED"/>
    <property type="molecule type" value="Genomic_DNA"/>
</dbReference>
<dbReference type="EMBL" id="AF109264">
    <property type="protein sequence ID" value="AAF16870.1"/>
    <property type="status" value="JOINED"/>
    <property type="molecule type" value="Genomic_DNA"/>
</dbReference>
<dbReference type="EMBL" id="AF109265">
    <property type="protein sequence ID" value="AAF16870.1"/>
    <property type="status" value="JOINED"/>
    <property type="molecule type" value="Genomic_DNA"/>
</dbReference>
<dbReference type="EMBL" id="AF109266">
    <property type="protein sequence ID" value="AAF16870.1"/>
    <property type="status" value="JOINED"/>
    <property type="molecule type" value="Genomic_DNA"/>
</dbReference>
<dbReference type="EMBL" id="AF109267">
    <property type="protein sequence ID" value="AAF16870.1"/>
    <property type="status" value="JOINED"/>
    <property type="molecule type" value="Genomic_DNA"/>
</dbReference>
<dbReference type="EMBL" id="AF109268">
    <property type="protein sequence ID" value="AAF16870.1"/>
    <property type="status" value="JOINED"/>
    <property type="molecule type" value="Genomic_DNA"/>
</dbReference>
<dbReference type="EMBL" id="AF109269">
    <property type="protein sequence ID" value="AAF16870.1"/>
    <property type="status" value="JOINED"/>
    <property type="molecule type" value="Genomic_DNA"/>
</dbReference>
<dbReference type="EMBL" id="AF109270">
    <property type="protein sequence ID" value="AAF16870.1"/>
    <property type="status" value="JOINED"/>
    <property type="molecule type" value="Genomic_DNA"/>
</dbReference>
<dbReference type="EMBL" id="AF109271">
    <property type="protein sequence ID" value="AAF16870.1"/>
    <property type="status" value="JOINED"/>
    <property type="molecule type" value="Genomic_DNA"/>
</dbReference>
<dbReference type="EMBL" id="AF109272">
    <property type="protein sequence ID" value="AAF16870.1"/>
    <property type="status" value="JOINED"/>
    <property type="molecule type" value="Genomic_DNA"/>
</dbReference>
<dbReference type="EMBL" id="AF109273">
    <property type="protein sequence ID" value="AAF16870.1"/>
    <property type="status" value="JOINED"/>
    <property type="molecule type" value="Genomic_DNA"/>
</dbReference>
<dbReference type="EMBL" id="AF109274">
    <property type="protein sequence ID" value="AAF16870.1"/>
    <property type="status" value="JOINED"/>
    <property type="molecule type" value="Genomic_DNA"/>
</dbReference>
<dbReference type="EMBL" id="AF109275">
    <property type="protein sequence ID" value="AAF16870.1"/>
    <property type="status" value="JOINED"/>
    <property type="molecule type" value="Genomic_DNA"/>
</dbReference>
<dbReference type="EMBL" id="AF109276">
    <property type="protein sequence ID" value="AAF16870.1"/>
    <property type="status" value="JOINED"/>
    <property type="molecule type" value="Genomic_DNA"/>
</dbReference>
<dbReference type="EMBL" id="AF109277">
    <property type="protein sequence ID" value="AAF16870.1"/>
    <property type="status" value="JOINED"/>
    <property type="molecule type" value="Genomic_DNA"/>
</dbReference>
<dbReference type="EMBL" id="AF109278">
    <property type="protein sequence ID" value="AAF16870.1"/>
    <property type="status" value="JOINED"/>
    <property type="molecule type" value="Genomic_DNA"/>
</dbReference>
<dbReference type="EMBL" id="AF109279">
    <property type="protein sequence ID" value="AAF16870.1"/>
    <property type="status" value="JOINED"/>
    <property type="molecule type" value="Genomic_DNA"/>
</dbReference>
<dbReference type="EMBL" id="AF109280">
    <property type="protein sequence ID" value="AAF16870.1"/>
    <property type="status" value="JOINED"/>
    <property type="molecule type" value="Genomic_DNA"/>
</dbReference>
<dbReference type="EMBL" id="AF109281">
    <property type="protein sequence ID" value="AAF16870.1"/>
    <property type="status" value="JOINED"/>
    <property type="molecule type" value="Genomic_DNA"/>
</dbReference>
<dbReference type="EMBL" id="AF109282">
    <property type="protein sequence ID" value="AAF16870.1"/>
    <property type="status" value="JOINED"/>
    <property type="molecule type" value="Genomic_DNA"/>
</dbReference>
<dbReference type="EMBL" id="AF109283">
    <property type="protein sequence ID" value="AAF16870.1"/>
    <property type="status" value="JOINED"/>
    <property type="molecule type" value="Genomic_DNA"/>
</dbReference>
<dbReference type="EMBL" id="AF109284">
    <property type="protein sequence ID" value="AAF16870.1"/>
    <property type="status" value="JOINED"/>
    <property type="molecule type" value="Genomic_DNA"/>
</dbReference>
<dbReference type="EMBL" id="AF109285">
    <property type="protein sequence ID" value="AAF16870.1"/>
    <property type="status" value="JOINED"/>
    <property type="molecule type" value="Genomic_DNA"/>
</dbReference>
<dbReference type="EMBL" id="AF109286">
    <property type="protein sequence ID" value="AAF16870.1"/>
    <property type="status" value="JOINED"/>
    <property type="molecule type" value="Genomic_DNA"/>
</dbReference>
<dbReference type="EMBL" id="AF109287">
    <property type="protein sequence ID" value="AAF16870.1"/>
    <property type="status" value="JOINED"/>
    <property type="molecule type" value="Genomic_DNA"/>
</dbReference>
<dbReference type="EMBL" id="AF109288">
    <property type="protein sequence ID" value="AAF16870.1"/>
    <property type="status" value="JOINED"/>
    <property type="molecule type" value="Genomic_DNA"/>
</dbReference>
<dbReference type="EMBL" id="AF109289">
    <property type="protein sequence ID" value="AAF16870.1"/>
    <property type="status" value="JOINED"/>
    <property type="molecule type" value="Genomic_DNA"/>
</dbReference>
<dbReference type="EMBL" id="AF109290">
    <property type="protein sequence ID" value="AAF16870.1"/>
    <property type="status" value="JOINED"/>
    <property type="molecule type" value="Genomic_DNA"/>
</dbReference>
<dbReference type="EMBL" id="AF069333">
    <property type="protein sequence ID" value="AAL04402.1"/>
    <property type="molecule type" value="Genomic_DNA"/>
</dbReference>
<dbReference type="EMBL" id="AY293855">
    <property type="protein sequence ID" value="AAP37954.1"/>
    <property type="molecule type" value="Genomic_DNA"/>
</dbReference>
<dbReference type="EMBL" id="AL353625">
    <property type="status" value="NOT_ANNOTATED_CDS"/>
    <property type="molecule type" value="Genomic_DNA"/>
</dbReference>
<dbReference type="EMBL" id="AL035691">
    <property type="status" value="NOT_ANNOTATED_CDS"/>
    <property type="molecule type" value="Genomic_DNA"/>
</dbReference>
<dbReference type="CCDS" id="CCDS5273.1"/>
<dbReference type="PIR" id="A28372">
    <property type="entry name" value="A28372"/>
</dbReference>
<dbReference type="RefSeq" id="NP_000867.3">
    <property type="nucleotide sequence ID" value="NM_000876.4"/>
</dbReference>
<dbReference type="PDB" id="1E6F">
    <property type="method" value="X-ray"/>
    <property type="resolution" value="1.75 A"/>
    <property type="chains" value="A/B=1508-1650"/>
</dbReference>
<dbReference type="PDB" id="1GP0">
    <property type="method" value="X-ray"/>
    <property type="resolution" value="1.40 A"/>
    <property type="chains" value="A=1508-1650"/>
</dbReference>
<dbReference type="PDB" id="1GP3">
    <property type="method" value="X-ray"/>
    <property type="resolution" value="1.95 A"/>
    <property type="chains" value="A=1508-1650"/>
</dbReference>
<dbReference type="PDB" id="1GQB">
    <property type="method" value="X-ray"/>
    <property type="resolution" value="1.80 A"/>
    <property type="chains" value="A/B=1508-1650"/>
</dbReference>
<dbReference type="PDB" id="1JPL">
    <property type="method" value="X-ray"/>
    <property type="resolution" value="2.40 A"/>
    <property type="chains" value="E/F/G/H=2480-2491"/>
</dbReference>
<dbReference type="PDB" id="1JWG">
    <property type="method" value="X-ray"/>
    <property type="resolution" value="2.00 A"/>
    <property type="chains" value="C/D=2479-2491"/>
</dbReference>
<dbReference type="PDB" id="1LF8">
    <property type="method" value="X-ray"/>
    <property type="resolution" value="2.30 A"/>
    <property type="chains" value="E/F/G/H=2480-2491"/>
</dbReference>
<dbReference type="PDB" id="2CNJ">
    <property type="method" value="NMR"/>
    <property type="chains" value="D=1508-1650"/>
</dbReference>
<dbReference type="PDB" id="2L29">
    <property type="method" value="NMR"/>
    <property type="chains" value="A=1508-1647"/>
</dbReference>
<dbReference type="PDB" id="2L2A">
    <property type="method" value="NMR"/>
    <property type="chains" value="A=1508-1647"/>
</dbReference>
<dbReference type="PDB" id="2M68">
    <property type="method" value="NMR"/>
    <property type="chains" value="A=1508-1647"/>
</dbReference>
<dbReference type="PDB" id="2M6T">
    <property type="method" value="NMR"/>
    <property type="chains" value="A=1508-1647"/>
</dbReference>
<dbReference type="PDB" id="2V5N">
    <property type="method" value="X-ray"/>
    <property type="resolution" value="3.20 A"/>
    <property type="chains" value="A=1508-1799"/>
</dbReference>
<dbReference type="PDB" id="2V5O">
    <property type="method" value="X-ray"/>
    <property type="resolution" value="2.91 A"/>
    <property type="chains" value="A=1508-2128"/>
</dbReference>
<dbReference type="PDB" id="2V5P">
    <property type="method" value="X-ray"/>
    <property type="resolution" value="4.10 A"/>
    <property type="chains" value="A/B=1508-1992"/>
</dbReference>
<dbReference type="PDB" id="5IEI">
    <property type="method" value="X-ray"/>
    <property type="resolution" value="2.80 A"/>
    <property type="chains" value="A=1508-1647"/>
</dbReference>
<dbReference type="PDB" id="6N5X">
    <property type="method" value="X-ray"/>
    <property type="resolution" value="2.05 A"/>
    <property type="chains" value="A=2347-2377"/>
</dbReference>
<dbReference type="PDB" id="6N5Y">
    <property type="method" value="X-ray"/>
    <property type="resolution" value="2.26 A"/>
    <property type="chains" value="A=2347-2377"/>
</dbReference>
<dbReference type="PDB" id="6P8I">
    <property type="method" value="X-ray"/>
    <property type="resolution" value="2.54 A"/>
    <property type="chains" value="A=36-763"/>
</dbReference>
<dbReference type="PDB" id="6V02">
    <property type="method" value="X-ray"/>
    <property type="resolution" value="2.46 A"/>
    <property type="chains" value="A=43-763"/>
</dbReference>
<dbReference type="PDB" id="6Z30">
    <property type="method" value="X-ray"/>
    <property type="resolution" value="1.50 A"/>
    <property type="chains" value="A=1222-1510"/>
</dbReference>
<dbReference type="PDB" id="6Z31">
    <property type="method" value="X-ray"/>
    <property type="resolution" value="2.56 A"/>
    <property type="chains" value="A/B=1082-1220"/>
</dbReference>
<dbReference type="PDB" id="6Z32">
    <property type="method" value="X-ray"/>
    <property type="resolution" value="3.47 A"/>
    <property type="chains" value="A/B=927-1649"/>
</dbReference>
<dbReference type="PDB" id="8AFZ">
    <property type="method" value="EM"/>
    <property type="resolution" value="10.00 A"/>
    <property type="chains" value="C=2347-2377"/>
</dbReference>
<dbReference type="PDBsum" id="1E6F"/>
<dbReference type="PDBsum" id="1GP0"/>
<dbReference type="PDBsum" id="1GP3"/>
<dbReference type="PDBsum" id="1GQB"/>
<dbReference type="PDBsum" id="1JPL"/>
<dbReference type="PDBsum" id="1JWG"/>
<dbReference type="PDBsum" id="1LF8"/>
<dbReference type="PDBsum" id="2CNJ"/>
<dbReference type="PDBsum" id="2L29"/>
<dbReference type="PDBsum" id="2L2A"/>
<dbReference type="PDBsum" id="2M68"/>
<dbReference type="PDBsum" id="2M6T"/>
<dbReference type="PDBsum" id="2V5N"/>
<dbReference type="PDBsum" id="2V5O"/>
<dbReference type="PDBsum" id="2V5P"/>
<dbReference type="PDBsum" id="5IEI"/>
<dbReference type="PDBsum" id="6N5X"/>
<dbReference type="PDBsum" id="6N5Y"/>
<dbReference type="PDBsum" id="6P8I"/>
<dbReference type="PDBsum" id="6V02"/>
<dbReference type="PDBsum" id="6Z30"/>
<dbReference type="PDBsum" id="6Z31"/>
<dbReference type="PDBsum" id="6Z32"/>
<dbReference type="PDBsum" id="8AFZ"/>
<dbReference type="EMDB" id="EMD-15413"/>
<dbReference type="SASBDB" id="P11717"/>
<dbReference type="SMR" id="P11717"/>
<dbReference type="BioGRID" id="109703">
    <property type="interactions" value="364"/>
</dbReference>
<dbReference type="CORUM" id="P11717"/>
<dbReference type="DIP" id="DIP-6027N"/>
<dbReference type="ELM" id="P11717"/>
<dbReference type="FunCoup" id="P11717">
    <property type="interactions" value="1582"/>
</dbReference>
<dbReference type="IntAct" id="P11717">
    <property type="interactions" value="144"/>
</dbReference>
<dbReference type="MINT" id="P11717"/>
<dbReference type="STRING" id="9606.ENSP00000349437"/>
<dbReference type="BindingDB" id="P11717"/>
<dbReference type="ChEMBL" id="CHEMBL3240"/>
<dbReference type="DrugBank" id="DB02900">
    <property type="generic name" value="alpha-D-mannose 6-phosphate"/>
</dbReference>
<dbReference type="DrugBank" id="DB16099">
    <property type="generic name" value="Avalglucosidase alfa"/>
</dbReference>
<dbReference type="DrugBank" id="DB13173">
    <property type="generic name" value="Cerliponase alfa"/>
</dbReference>
<dbReference type="DrugBank" id="DB16708">
    <property type="generic name" value="Cipaglucosidase alfa"/>
</dbReference>
<dbReference type="DrugBank" id="DB11848">
    <property type="generic name" value="Mannose 6-phosphate"/>
</dbReference>
<dbReference type="DrugBank" id="DB01277">
    <property type="generic name" value="Mecasermin"/>
</dbReference>
<dbReference type="DrugBank" id="DB14751">
    <property type="generic name" value="Mecasermin rinfabate"/>
</dbReference>
<dbReference type="DrugCentral" id="P11717"/>
<dbReference type="TCDB" id="9.B.247.1.2">
    <property type="family name" value="the mannose 6-phosphate receptor (m6pr) family"/>
</dbReference>
<dbReference type="UniLectin" id="P11717"/>
<dbReference type="GlyConnect" id="1084">
    <property type="glycosylation" value="38 N-Linked glycans (16 sites)"/>
</dbReference>
<dbReference type="GlyCosmos" id="P11717">
    <property type="glycosylation" value="23 sites, 41 glycans"/>
</dbReference>
<dbReference type="GlyGen" id="P11717">
    <property type="glycosylation" value="35 sites, 106 N-linked glycans (21 sites), 2 O-linked glycans (10 sites)"/>
</dbReference>
<dbReference type="iPTMnet" id="P11717"/>
<dbReference type="PhosphoSitePlus" id="P11717"/>
<dbReference type="SwissPalm" id="P11717"/>
<dbReference type="BioMuta" id="IGF2R"/>
<dbReference type="DMDM" id="317373416"/>
<dbReference type="CPTAC" id="CPTAC-2601"/>
<dbReference type="CPTAC" id="non-CPTAC-2642"/>
<dbReference type="jPOST" id="P11717"/>
<dbReference type="MassIVE" id="P11717"/>
<dbReference type="PaxDb" id="9606-ENSP00000349437"/>
<dbReference type="PeptideAtlas" id="P11717"/>
<dbReference type="ProteomicsDB" id="52802"/>
<dbReference type="Pumba" id="P11717"/>
<dbReference type="Antibodypedia" id="1396">
    <property type="antibodies" value="725 antibodies from 41 providers"/>
</dbReference>
<dbReference type="DNASU" id="3482"/>
<dbReference type="Ensembl" id="ENST00000356956.6">
    <property type="protein sequence ID" value="ENSP00000349437.1"/>
    <property type="gene ID" value="ENSG00000197081.16"/>
</dbReference>
<dbReference type="GeneID" id="3482"/>
<dbReference type="KEGG" id="hsa:3482"/>
<dbReference type="MANE-Select" id="ENST00000356956.6">
    <property type="protein sequence ID" value="ENSP00000349437.1"/>
    <property type="RefSeq nucleotide sequence ID" value="NM_000876.4"/>
    <property type="RefSeq protein sequence ID" value="NP_000867.3"/>
</dbReference>
<dbReference type="UCSC" id="uc003qta.4">
    <property type="organism name" value="human"/>
</dbReference>
<dbReference type="AGR" id="HGNC:5467"/>
<dbReference type="CTD" id="3482"/>
<dbReference type="DisGeNET" id="3482"/>
<dbReference type="GeneCards" id="IGF2R"/>
<dbReference type="HGNC" id="HGNC:5467">
    <property type="gene designation" value="IGF2R"/>
</dbReference>
<dbReference type="HPA" id="ENSG00000197081">
    <property type="expression patterns" value="Tissue enhanced (skeletal)"/>
</dbReference>
<dbReference type="MalaCards" id="IGF2R"/>
<dbReference type="MIM" id="147280">
    <property type="type" value="gene"/>
</dbReference>
<dbReference type="neXtProt" id="NX_P11717"/>
<dbReference type="OpenTargets" id="ENSG00000197081"/>
<dbReference type="PharmGKB" id="PA29701"/>
<dbReference type="VEuPathDB" id="HostDB:ENSG00000197081"/>
<dbReference type="eggNOG" id="KOG4504">
    <property type="taxonomic scope" value="Eukaryota"/>
</dbReference>
<dbReference type="GeneTree" id="ENSGT00390000013943"/>
<dbReference type="HOGENOM" id="CLU_001182_0_0_1"/>
<dbReference type="InParanoid" id="P11717"/>
<dbReference type="OMA" id="FITYQSS"/>
<dbReference type="OrthoDB" id="4504960at2759"/>
<dbReference type="PAN-GO" id="P11717">
    <property type="GO annotations" value="4 GO annotations based on evolutionary models"/>
</dbReference>
<dbReference type="PhylomeDB" id="P11717"/>
<dbReference type="TreeFam" id="TF328963"/>
<dbReference type="PathwayCommons" id="P11717"/>
<dbReference type="Reactome" id="R-HSA-432722">
    <property type="pathway name" value="Golgi Associated Vesicle Biogenesis"/>
</dbReference>
<dbReference type="Reactome" id="R-HSA-6798695">
    <property type="pathway name" value="Neutrophil degranulation"/>
</dbReference>
<dbReference type="Reactome" id="R-HSA-6811440">
    <property type="pathway name" value="Retrograde transport at the Trans-Golgi-Network"/>
</dbReference>
<dbReference type="Reactome" id="R-HSA-8856825">
    <property type="pathway name" value="Cargo recognition for clathrin-mediated endocytosis"/>
</dbReference>
<dbReference type="Reactome" id="R-HSA-8856828">
    <property type="pathway name" value="Clathrin-mediated endocytosis"/>
</dbReference>
<dbReference type="SignaLink" id="P11717"/>
<dbReference type="SIGNOR" id="P11717"/>
<dbReference type="BioGRID-ORCS" id="3482">
    <property type="hits" value="22 hits in 1171 CRISPR screens"/>
</dbReference>
<dbReference type="ChiTaRS" id="IGF2R">
    <property type="organism name" value="human"/>
</dbReference>
<dbReference type="EvolutionaryTrace" id="P11717"/>
<dbReference type="GeneWiki" id="Insulin-like_growth_factor_2_receptor"/>
<dbReference type="GenomeRNAi" id="3482"/>
<dbReference type="Pharos" id="P11717">
    <property type="development level" value="Tclin"/>
</dbReference>
<dbReference type="PRO" id="PR:P11717"/>
<dbReference type="Proteomes" id="UP000005640">
    <property type="component" value="Chromosome 6"/>
</dbReference>
<dbReference type="RNAct" id="P11717">
    <property type="molecule type" value="protein"/>
</dbReference>
<dbReference type="Bgee" id="ENSG00000197081">
    <property type="expression patterns" value="Expressed in stromal cell of endometrium and 195 other cell types or tissues"/>
</dbReference>
<dbReference type="ExpressionAtlas" id="P11717">
    <property type="expression patterns" value="baseline and differential"/>
</dbReference>
<dbReference type="GO" id="GO:0009986">
    <property type="term" value="C:cell surface"/>
    <property type="evidence" value="ECO:0000314"/>
    <property type="project" value="UniProtKB"/>
</dbReference>
<dbReference type="GO" id="GO:0030118">
    <property type="term" value="C:clathrin coat"/>
    <property type="evidence" value="ECO:0007669"/>
    <property type="project" value="Ensembl"/>
</dbReference>
<dbReference type="GO" id="GO:0030669">
    <property type="term" value="C:clathrin-coated endocytic vesicle membrane"/>
    <property type="evidence" value="ECO:0000304"/>
    <property type="project" value="Reactome"/>
</dbReference>
<dbReference type="GO" id="GO:0005769">
    <property type="term" value="C:early endosome"/>
    <property type="evidence" value="ECO:0000315"/>
    <property type="project" value="UniProtKB"/>
</dbReference>
<dbReference type="GO" id="GO:0030139">
    <property type="term" value="C:endocytic vesicle"/>
    <property type="evidence" value="ECO:0000314"/>
    <property type="project" value="UniProtKB"/>
</dbReference>
<dbReference type="GO" id="GO:0005768">
    <property type="term" value="C:endosome"/>
    <property type="evidence" value="ECO:0000314"/>
    <property type="project" value="MGI"/>
</dbReference>
<dbReference type="GO" id="GO:0010008">
    <property type="term" value="C:endosome membrane"/>
    <property type="evidence" value="ECO:0000314"/>
    <property type="project" value="UniProtKB"/>
</dbReference>
<dbReference type="GO" id="GO:0070062">
    <property type="term" value="C:extracellular exosome"/>
    <property type="evidence" value="ECO:0007005"/>
    <property type="project" value="UniProtKB"/>
</dbReference>
<dbReference type="GO" id="GO:0005925">
    <property type="term" value="C:focal adhesion"/>
    <property type="evidence" value="ECO:0007005"/>
    <property type="project" value="UniProtKB"/>
</dbReference>
<dbReference type="GO" id="GO:0005794">
    <property type="term" value="C:Golgi apparatus"/>
    <property type="evidence" value="ECO:0000314"/>
    <property type="project" value="UniProtKB"/>
</dbReference>
<dbReference type="GO" id="GO:0000139">
    <property type="term" value="C:Golgi membrane"/>
    <property type="evidence" value="ECO:0007669"/>
    <property type="project" value="UniProtKB-SubCell"/>
</dbReference>
<dbReference type="GO" id="GO:0005770">
    <property type="term" value="C:late endosome"/>
    <property type="evidence" value="ECO:0000314"/>
    <property type="project" value="MGI"/>
</dbReference>
<dbReference type="GO" id="GO:0016020">
    <property type="term" value="C:membrane"/>
    <property type="evidence" value="ECO:0007005"/>
    <property type="project" value="UniProtKB"/>
</dbReference>
<dbReference type="GO" id="GO:0005641">
    <property type="term" value="C:nuclear envelope lumen"/>
    <property type="evidence" value="ECO:0007669"/>
    <property type="project" value="Ensembl"/>
</dbReference>
<dbReference type="GO" id="GO:0048471">
    <property type="term" value="C:perinuclear region of cytoplasm"/>
    <property type="evidence" value="ECO:0007669"/>
    <property type="project" value="Ensembl"/>
</dbReference>
<dbReference type="GO" id="GO:0005886">
    <property type="term" value="C:plasma membrane"/>
    <property type="evidence" value="ECO:0000318"/>
    <property type="project" value="GO_Central"/>
</dbReference>
<dbReference type="GO" id="GO:0030667">
    <property type="term" value="C:secretory granule membrane"/>
    <property type="evidence" value="ECO:0000304"/>
    <property type="project" value="Reactome"/>
</dbReference>
<dbReference type="GO" id="GO:0005802">
    <property type="term" value="C:trans-Golgi network"/>
    <property type="evidence" value="ECO:0000315"/>
    <property type="project" value="UniProtKB"/>
</dbReference>
<dbReference type="GO" id="GO:0032588">
    <property type="term" value="C:trans-Golgi network membrane"/>
    <property type="evidence" value="ECO:0000304"/>
    <property type="project" value="Reactome"/>
</dbReference>
<dbReference type="GO" id="GO:0030140">
    <property type="term" value="C:trans-Golgi network transport vesicle"/>
    <property type="evidence" value="ECO:0000314"/>
    <property type="project" value="MGI"/>
</dbReference>
<dbReference type="GO" id="GO:0030133">
    <property type="term" value="C:transport vesicle"/>
    <property type="evidence" value="ECO:0000304"/>
    <property type="project" value="Reactome"/>
</dbReference>
<dbReference type="GO" id="GO:0005537">
    <property type="term" value="F:D-mannose binding"/>
    <property type="evidence" value="ECO:0007669"/>
    <property type="project" value="Ensembl"/>
</dbReference>
<dbReference type="GO" id="GO:0019899">
    <property type="term" value="F:enzyme binding"/>
    <property type="evidence" value="ECO:0007669"/>
    <property type="project" value="Ensembl"/>
</dbReference>
<dbReference type="GO" id="GO:0001965">
    <property type="term" value="F:G-protein alpha-subunit binding"/>
    <property type="evidence" value="ECO:0007669"/>
    <property type="project" value="Ensembl"/>
</dbReference>
<dbReference type="GO" id="GO:0042802">
    <property type="term" value="F:identical protein binding"/>
    <property type="evidence" value="ECO:0000353"/>
    <property type="project" value="IntAct"/>
</dbReference>
<dbReference type="GO" id="GO:0005520">
    <property type="term" value="F:insulin-like growth factor binding"/>
    <property type="evidence" value="ECO:0000318"/>
    <property type="project" value="GO_Central"/>
</dbReference>
<dbReference type="GO" id="GO:0031995">
    <property type="term" value="F:insulin-like growth factor II binding"/>
    <property type="evidence" value="ECO:0007669"/>
    <property type="project" value="Ensembl"/>
</dbReference>
<dbReference type="GO" id="GO:0005010">
    <property type="term" value="F:insulin-like growth factor receptor activity"/>
    <property type="evidence" value="ECO:0000304"/>
    <property type="project" value="ProtInc"/>
</dbReference>
<dbReference type="GO" id="GO:0051219">
    <property type="term" value="F:phosphoprotein binding"/>
    <property type="evidence" value="ECO:0000314"/>
    <property type="project" value="UniProtKB"/>
</dbReference>
<dbReference type="GO" id="GO:0001972">
    <property type="term" value="F:retinoic acid binding"/>
    <property type="evidence" value="ECO:0007669"/>
    <property type="project" value="Ensembl"/>
</dbReference>
<dbReference type="GO" id="GO:1905394">
    <property type="term" value="F:retromer complex binding"/>
    <property type="evidence" value="ECO:0000314"/>
    <property type="project" value="UniProtKB"/>
</dbReference>
<dbReference type="GO" id="GO:0038023">
    <property type="term" value="F:signaling receptor activity"/>
    <property type="evidence" value="ECO:0000304"/>
    <property type="project" value="ProtInc"/>
</dbReference>
<dbReference type="GO" id="GO:0031100">
    <property type="term" value="P:animal organ regeneration"/>
    <property type="evidence" value="ECO:0007669"/>
    <property type="project" value="Ensembl"/>
</dbReference>
<dbReference type="GO" id="GO:0007186">
    <property type="term" value="P:G protein-coupled receptor signaling pathway"/>
    <property type="evidence" value="ECO:0007669"/>
    <property type="project" value="Ensembl"/>
</dbReference>
<dbReference type="GO" id="GO:0001889">
    <property type="term" value="P:liver development"/>
    <property type="evidence" value="ECO:0007669"/>
    <property type="project" value="Ensembl"/>
</dbReference>
<dbReference type="GO" id="GO:0007041">
    <property type="term" value="P:lysosomal transport"/>
    <property type="evidence" value="ECO:0000318"/>
    <property type="project" value="GO_Central"/>
</dbReference>
<dbReference type="GO" id="GO:0044794">
    <property type="term" value="P:positive regulation by host of viral process"/>
    <property type="evidence" value="ECO:0000315"/>
    <property type="project" value="ARUK-UCL"/>
</dbReference>
<dbReference type="GO" id="GO:0043065">
    <property type="term" value="P:positive regulation of apoptotic process"/>
    <property type="evidence" value="ECO:0007669"/>
    <property type="project" value="Ensembl"/>
</dbReference>
<dbReference type="GO" id="GO:0009791">
    <property type="term" value="P:post-embryonic development"/>
    <property type="evidence" value="ECO:0007669"/>
    <property type="project" value="Ensembl"/>
</dbReference>
<dbReference type="GO" id="GO:0006898">
    <property type="term" value="P:receptor-mediated endocytosis"/>
    <property type="evidence" value="ECO:0000304"/>
    <property type="project" value="ProtInc"/>
</dbReference>
<dbReference type="GO" id="GO:0032526">
    <property type="term" value="P:response to retinoic acid"/>
    <property type="evidence" value="ECO:0007669"/>
    <property type="project" value="Ensembl"/>
</dbReference>
<dbReference type="GO" id="GO:1904772">
    <property type="term" value="P:response to tetrachloromethane"/>
    <property type="evidence" value="ECO:0007669"/>
    <property type="project" value="Ensembl"/>
</dbReference>
<dbReference type="GO" id="GO:0007165">
    <property type="term" value="P:signal transduction"/>
    <property type="evidence" value="ECO:0000304"/>
    <property type="project" value="ProtInc"/>
</dbReference>
<dbReference type="GO" id="GO:0007283">
    <property type="term" value="P:spermatogenesis"/>
    <property type="evidence" value="ECO:0007669"/>
    <property type="project" value="Ensembl"/>
</dbReference>
<dbReference type="CDD" id="cd00062">
    <property type="entry name" value="FN2"/>
    <property type="match status" value="1"/>
</dbReference>
<dbReference type="FunFam" id="2.10.10.10:FF:000006">
    <property type="entry name" value="Insulin-like growth factor 2 receptor"/>
    <property type="match status" value="1"/>
</dbReference>
<dbReference type="FunFam" id="2.70.130.10:FF:000004">
    <property type="entry name" value="Insulin-like growth factor 2 receptor"/>
    <property type="match status" value="1"/>
</dbReference>
<dbReference type="FunFam" id="2.70.130.10:FF:000005">
    <property type="entry name" value="Insulin-like growth factor 2 receptor"/>
    <property type="match status" value="1"/>
</dbReference>
<dbReference type="FunFam" id="2.70.130.10:FF:000006">
    <property type="entry name" value="Insulin-like growth factor 2 receptor"/>
    <property type="match status" value="1"/>
</dbReference>
<dbReference type="FunFam" id="2.70.130.10:FF:000007">
    <property type="entry name" value="Insulin-like growth factor 2 receptor"/>
    <property type="match status" value="1"/>
</dbReference>
<dbReference type="FunFam" id="2.70.130.10:FF:000009">
    <property type="entry name" value="Insulin-like growth factor 2 receptor"/>
    <property type="match status" value="1"/>
</dbReference>
<dbReference type="FunFam" id="2.70.130.10:FF:000010">
    <property type="entry name" value="Insulin-like growth factor 2 receptor"/>
    <property type="match status" value="1"/>
</dbReference>
<dbReference type="FunFam" id="2.70.130.10:FF:000011">
    <property type="entry name" value="Insulin-like growth factor 2 receptor"/>
    <property type="match status" value="1"/>
</dbReference>
<dbReference type="FunFam" id="2.70.130.10:FF:000012">
    <property type="entry name" value="Insulin-like growth factor 2 receptor"/>
    <property type="match status" value="1"/>
</dbReference>
<dbReference type="FunFam" id="2.70.130.10:FF:000013">
    <property type="entry name" value="Insulin-like growth factor 2 receptor"/>
    <property type="match status" value="1"/>
</dbReference>
<dbReference type="FunFam" id="2.70.130.10:FF:000015">
    <property type="entry name" value="Insulin-like growth factor 2 receptor"/>
    <property type="match status" value="1"/>
</dbReference>
<dbReference type="FunFam" id="2.70.130.10:FF:000016">
    <property type="entry name" value="Insulin-like growth factor 2 receptor"/>
    <property type="match status" value="1"/>
</dbReference>
<dbReference type="FunFam" id="2.70.130.10:FF:000017">
    <property type="entry name" value="Insulin-like growth factor 2 receptor"/>
    <property type="match status" value="1"/>
</dbReference>
<dbReference type="FunFam" id="2.70.130.10:FF:000019">
    <property type="entry name" value="Insulin-like growth factor 2 receptor"/>
    <property type="match status" value="1"/>
</dbReference>
<dbReference type="FunFam" id="2.70.130.10:FF:000020">
    <property type="entry name" value="Insulin-like growth factor 2 receptor"/>
    <property type="match status" value="1"/>
</dbReference>
<dbReference type="FunFam" id="2.70.130.10:FF:000022">
    <property type="entry name" value="Insulin-like growth factor 2 receptor"/>
    <property type="match status" value="1"/>
</dbReference>
<dbReference type="Gene3D" id="2.10.10.10">
    <property type="entry name" value="Fibronectin, type II, collagen-binding"/>
    <property type="match status" value="1"/>
</dbReference>
<dbReference type="Gene3D" id="2.70.130.10">
    <property type="entry name" value="Mannose-6-phosphate receptor binding domain"/>
    <property type="match status" value="15"/>
</dbReference>
<dbReference type="InterPro" id="IPR000479">
    <property type="entry name" value="CIMR_rpt"/>
</dbReference>
<dbReference type="InterPro" id="IPR000562">
    <property type="entry name" value="FN_type2_dom"/>
</dbReference>
<dbReference type="InterPro" id="IPR036943">
    <property type="entry name" value="FN_type2_sf"/>
</dbReference>
<dbReference type="InterPro" id="IPR013806">
    <property type="entry name" value="Kringle-like"/>
</dbReference>
<dbReference type="InterPro" id="IPR009011">
    <property type="entry name" value="Man6P_isomerase_rcpt-bd_dom_sf"/>
</dbReference>
<dbReference type="InterPro" id="IPR044865">
    <property type="entry name" value="MRH_dom"/>
</dbReference>
<dbReference type="PANTHER" id="PTHR15071:SF0">
    <property type="entry name" value="MANNOSE 6-PHOSPHATE RECEPTOR-LIKE PROTEIN 1"/>
    <property type="match status" value="1"/>
</dbReference>
<dbReference type="PANTHER" id="PTHR15071">
    <property type="entry name" value="MANNOSE-6-PHOSPHATE RECEPTOR FAMILY MEMBER"/>
    <property type="match status" value="1"/>
</dbReference>
<dbReference type="Pfam" id="PF00878">
    <property type="entry name" value="CIMR"/>
    <property type="match status" value="15"/>
</dbReference>
<dbReference type="Pfam" id="PF00040">
    <property type="entry name" value="fn2"/>
    <property type="match status" value="1"/>
</dbReference>
<dbReference type="PRINTS" id="PR00013">
    <property type="entry name" value="FNTYPEII"/>
</dbReference>
<dbReference type="SMART" id="SM01404">
    <property type="entry name" value="CIMR"/>
    <property type="match status" value="14"/>
</dbReference>
<dbReference type="SMART" id="SM00059">
    <property type="entry name" value="FN2"/>
    <property type="match status" value="1"/>
</dbReference>
<dbReference type="SUPFAM" id="SSF57440">
    <property type="entry name" value="Kringle-like"/>
    <property type="match status" value="1"/>
</dbReference>
<dbReference type="SUPFAM" id="SSF50911">
    <property type="entry name" value="Mannose 6-phosphate receptor domain"/>
    <property type="match status" value="15"/>
</dbReference>
<dbReference type="PROSITE" id="PS00023">
    <property type="entry name" value="FN2_1"/>
    <property type="match status" value="1"/>
</dbReference>
<dbReference type="PROSITE" id="PS51092">
    <property type="entry name" value="FN2_2"/>
    <property type="match status" value="1"/>
</dbReference>
<dbReference type="PROSITE" id="PS51914">
    <property type="entry name" value="MRH"/>
    <property type="match status" value="15"/>
</dbReference>
<organism>
    <name type="scientific">Homo sapiens</name>
    <name type="common">Human</name>
    <dbReference type="NCBI Taxonomy" id="9606"/>
    <lineage>
        <taxon>Eukaryota</taxon>
        <taxon>Metazoa</taxon>
        <taxon>Chordata</taxon>
        <taxon>Craniata</taxon>
        <taxon>Vertebrata</taxon>
        <taxon>Euteleostomi</taxon>
        <taxon>Mammalia</taxon>
        <taxon>Eutheria</taxon>
        <taxon>Euarchontoglires</taxon>
        <taxon>Primates</taxon>
        <taxon>Haplorrhini</taxon>
        <taxon>Catarrhini</taxon>
        <taxon>Hominidae</taxon>
        <taxon>Homo</taxon>
    </lineage>
</organism>
<protein>
    <recommendedName>
        <fullName>Cation-independent mannose-6-phosphate receptor</fullName>
        <shortName>CI Man-6-P receptor</shortName>
        <shortName>CI-MPR</shortName>
        <shortName>M6PR</shortName>
    </recommendedName>
    <alternativeName>
        <fullName>300 kDa mannose 6-phosphate receptor</fullName>
        <shortName>MPR 300</shortName>
    </alternativeName>
    <alternativeName>
        <fullName>Insulin-like growth factor 2 receptor</fullName>
    </alternativeName>
    <alternativeName>
        <fullName>Insulin-like growth factor II receptor</fullName>
        <shortName>IGF-II receptor</shortName>
    </alternativeName>
    <alternativeName>
        <fullName>M6P/IGF2 receptor</fullName>
        <shortName>M6P/IGF2R</shortName>
    </alternativeName>
    <cdAntigenName>CD222</cdAntigenName>
</protein>
<reference key="1">
    <citation type="journal article" date="1987" name="Nature">
        <title>Insulin-like growth factor II receptor as a multifunctional binding protein.</title>
        <authorList>
            <person name="Morgan D.O."/>
            <person name="Edman J.C."/>
            <person name="Standring D.N."/>
            <person name="Fried V.A."/>
            <person name="Smith M.C."/>
            <person name="Roth R.A."/>
            <person name="Rutter W.J."/>
        </authorList>
    </citation>
    <scope>NUCLEOTIDE SEQUENCE [MRNA]</scope>
    <scope>PARTIAL PROTEIN SEQUENCE</scope>
    <scope>VARIANT GLY-1619</scope>
    <scope>CLEAVAGE OF SIGNAL PEPTIDE AFTER CYS-23</scope>
    <scope>TOPOLOGY</scope>
</reference>
<reference key="2">
    <citation type="journal article" date="1988" name="J. Biol. Chem.">
        <title>The human cation-independent mannose 6-phosphate receptor. Cloning and sequence of the full-length cDNA and expression of functional receptor in COS cells.</title>
        <authorList>
            <person name="Oshima A."/>
            <person name="Nolan C.M."/>
            <person name="Kyle J.W."/>
            <person name="Grubb J.H."/>
            <person name="Sly W.S."/>
        </authorList>
    </citation>
    <scope>NUCLEOTIDE SEQUENCE [MRNA]</scope>
    <scope>VARIANT GLY-1619</scope>
    <scope>FUNCTION</scope>
</reference>
<reference key="3">
    <citation type="submission" date="1998-11" db="EMBL/GenBank/DDBJ databases">
        <title>The genomic structure of the gene encoding the human mannose 6 phosphate/insulin-like growth factor 2 receptor (M6P/IGF2R).</title>
        <authorList>
            <person name="Gemma A."/>
            <person name="Seike Y."/>
            <person name="Uematsu K."/>
            <person name="Seike M."/>
            <person name="Bennett W.P."/>
            <person name="Harris C.C."/>
            <person name="Kudoh S."/>
        </authorList>
    </citation>
    <scope>NUCLEOTIDE SEQUENCE [GENOMIC DNA]</scope>
    <scope>VARIANT GLY-1619</scope>
</reference>
<reference key="4">
    <citation type="journal article" date="1999" name="Mamm. Genome">
        <title>Genomic structure of the human M6P/IGF2 receptor.</title>
        <authorList>
            <person name="Killian J.K."/>
            <person name="Jirtle R.L."/>
        </authorList>
    </citation>
    <scope>NUCLEOTIDE SEQUENCE [GENOMIC DNA]</scope>
</reference>
<reference key="5">
    <citation type="submission" date="2003-05" db="EMBL/GenBank/DDBJ databases">
        <authorList>
            <consortium name="NIEHS SNPs program"/>
        </authorList>
    </citation>
    <scope>NUCLEOTIDE SEQUENCE [GENOMIC DNA]</scope>
    <scope>VARIANTS HIS-91; LEU-203; ASP-231; VAL-252; GLY-273; GLN-512; SER-604; THR-724; VAL-817; SER-856; MET-1107; ILE-1124; SER-1184; GLU-1315; HIS-1335; GLY-1619; HIS-1832; ASP-1860; MET-1908; SER-2020 AND VAL-2459</scope>
</reference>
<reference key="6">
    <citation type="journal article" date="2003" name="Nature">
        <title>The DNA sequence and analysis of human chromosome 6.</title>
        <authorList>
            <person name="Mungall A.J."/>
            <person name="Palmer S.A."/>
            <person name="Sims S.K."/>
            <person name="Edwards C.A."/>
            <person name="Ashurst J.L."/>
            <person name="Wilming L."/>
            <person name="Jones M.C."/>
            <person name="Horton R."/>
            <person name="Hunt S.E."/>
            <person name="Scott C.E."/>
            <person name="Gilbert J.G.R."/>
            <person name="Clamp M.E."/>
            <person name="Bethel G."/>
            <person name="Milne S."/>
            <person name="Ainscough R."/>
            <person name="Almeida J.P."/>
            <person name="Ambrose K.D."/>
            <person name="Andrews T.D."/>
            <person name="Ashwell R.I.S."/>
            <person name="Babbage A.K."/>
            <person name="Bagguley C.L."/>
            <person name="Bailey J."/>
            <person name="Banerjee R."/>
            <person name="Barker D.J."/>
            <person name="Barlow K.F."/>
            <person name="Bates K."/>
            <person name="Beare D.M."/>
            <person name="Beasley H."/>
            <person name="Beasley O."/>
            <person name="Bird C.P."/>
            <person name="Blakey S.E."/>
            <person name="Bray-Allen S."/>
            <person name="Brook J."/>
            <person name="Brown A.J."/>
            <person name="Brown J.Y."/>
            <person name="Burford D.C."/>
            <person name="Burrill W."/>
            <person name="Burton J."/>
            <person name="Carder C."/>
            <person name="Carter N.P."/>
            <person name="Chapman J.C."/>
            <person name="Clark S.Y."/>
            <person name="Clark G."/>
            <person name="Clee C.M."/>
            <person name="Clegg S."/>
            <person name="Cobley V."/>
            <person name="Collier R.E."/>
            <person name="Collins J.E."/>
            <person name="Colman L.K."/>
            <person name="Corby N.R."/>
            <person name="Coville G.J."/>
            <person name="Culley K.M."/>
            <person name="Dhami P."/>
            <person name="Davies J."/>
            <person name="Dunn M."/>
            <person name="Earthrowl M.E."/>
            <person name="Ellington A.E."/>
            <person name="Evans K.A."/>
            <person name="Faulkner L."/>
            <person name="Francis M.D."/>
            <person name="Frankish A."/>
            <person name="Frankland J."/>
            <person name="French L."/>
            <person name="Garner P."/>
            <person name="Garnett J."/>
            <person name="Ghori M.J."/>
            <person name="Gilby L.M."/>
            <person name="Gillson C.J."/>
            <person name="Glithero R.J."/>
            <person name="Grafham D.V."/>
            <person name="Grant M."/>
            <person name="Gribble S."/>
            <person name="Griffiths C."/>
            <person name="Griffiths M.N.D."/>
            <person name="Hall R."/>
            <person name="Halls K.S."/>
            <person name="Hammond S."/>
            <person name="Harley J.L."/>
            <person name="Hart E.A."/>
            <person name="Heath P.D."/>
            <person name="Heathcott R."/>
            <person name="Holmes S.J."/>
            <person name="Howden P.J."/>
            <person name="Howe K.L."/>
            <person name="Howell G.R."/>
            <person name="Huckle E."/>
            <person name="Humphray S.J."/>
            <person name="Humphries M.D."/>
            <person name="Hunt A.R."/>
            <person name="Johnson C.M."/>
            <person name="Joy A.A."/>
            <person name="Kay M."/>
            <person name="Keenan S.J."/>
            <person name="Kimberley A.M."/>
            <person name="King A."/>
            <person name="Laird G.K."/>
            <person name="Langford C."/>
            <person name="Lawlor S."/>
            <person name="Leongamornlert D.A."/>
            <person name="Leversha M."/>
            <person name="Lloyd C.R."/>
            <person name="Lloyd D.M."/>
            <person name="Loveland J.E."/>
            <person name="Lovell J."/>
            <person name="Martin S."/>
            <person name="Mashreghi-Mohammadi M."/>
            <person name="Maslen G.L."/>
            <person name="Matthews L."/>
            <person name="McCann O.T."/>
            <person name="McLaren S.J."/>
            <person name="McLay K."/>
            <person name="McMurray A."/>
            <person name="Moore M.J.F."/>
            <person name="Mullikin J.C."/>
            <person name="Niblett D."/>
            <person name="Nickerson T."/>
            <person name="Novik K.L."/>
            <person name="Oliver K."/>
            <person name="Overton-Larty E.K."/>
            <person name="Parker A."/>
            <person name="Patel R."/>
            <person name="Pearce A.V."/>
            <person name="Peck A.I."/>
            <person name="Phillimore B.J.C.T."/>
            <person name="Phillips S."/>
            <person name="Plumb R.W."/>
            <person name="Porter K.M."/>
            <person name="Ramsey Y."/>
            <person name="Ranby S.A."/>
            <person name="Rice C.M."/>
            <person name="Ross M.T."/>
            <person name="Searle S.M."/>
            <person name="Sehra H.K."/>
            <person name="Sheridan E."/>
            <person name="Skuce C.D."/>
            <person name="Smith S."/>
            <person name="Smith M."/>
            <person name="Spraggon L."/>
            <person name="Squares S.L."/>
            <person name="Steward C.A."/>
            <person name="Sycamore N."/>
            <person name="Tamlyn-Hall G."/>
            <person name="Tester J."/>
            <person name="Theaker A.J."/>
            <person name="Thomas D.W."/>
            <person name="Thorpe A."/>
            <person name="Tracey A."/>
            <person name="Tromans A."/>
            <person name="Tubby B."/>
            <person name="Wall M."/>
            <person name="Wallis J.M."/>
            <person name="West A.P."/>
            <person name="White S.S."/>
            <person name="Whitehead S.L."/>
            <person name="Whittaker H."/>
            <person name="Wild A."/>
            <person name="Willey D.J."/>
            <person name="Wilmer T.E."/>
            <person name="Wood J.M."/>
            <person name="Wray P.W."/>
            <person name="Wyatt J.C."/>
            <person name="Young L."/>
            <person name="Younger R.M."/>
            <person name="Bentley D.R."/>
            <person name="Coulson A."/>
            <person name="Durbin R.M."/>
            <person name="Hubbard T."/>
            <person name="Sulston J.E."/>
            <person name="Dunham I."/>
            <person name="Rogers J."/>
            <person name="Beck S."/>
        </authorList>
    </citation>
    <scope>NUCLEOTIDE SEQUENCE [LARGE SCALE GENOMIC DNA]</scope>
</reference>
<reference key="7">
    <citation type="journal article" date="2000" name="Proc. Natl. Acad. Sci. U.S.A.">
        <title>Internalization of CD26 by mannose 6-phosphate/insulin-like growth factor II receptor contributes to T cell activation.</title>
        <authorList>
            <person name="Ikushima H."/>
            <person name="Munakata Y."/>
            <person name="Ishii T."/>
            <person name="Iwata S."/>
            <person name="Terashima M."/>
            <person name="Tanaka H."/>
            <person name="Schlossman S.F."/>
            <person name="Morimoto C."/>
        </authorList>
    </citation>
    <scope>FUNCTION</scope>
    <scope>INTERACTION WITH DPP4</scope>
    <scope>SUBCELLULAR LOCATION</scope>
</reference>
<reference key="8">
    <citation type="journal article" date="2001" name="Science">
        <title>Sorting of mannose 6-phosphate receptors mediated by the GGAs.</title>
        <authorList>
            <person name="Puertollano R."/>
            <person name="Aguilar R.C."/>
            <person name="Gorshkova I."/>
            <person name="Crouch R.J."/>
            <person name="Bonifacino J.S."/>
        </authorList>
    </citation>
    <scope>INTERACTION WITH GGA1; GGA2 AND GGA3</scope>
</reference>
<reference key="9">
    <citation type="journal article" date="2003" name="Nat. Biotechnol.">
        <title>Identification and quantification of N-linked glycoproteins using hydrazide chemistry, stable isotope labeling and mass spectrometry.</title>
        <authorList>
            <person name="Zhang H."/>
            <person name="Li X.-J."/>
            <person name="Martin D.B."/>
            <person name="Aebersold R."/>
        </authorList>
    </citation>
    <scope>GLYCOSYLATION AT ASN-112; ASN-581; ASN-747 AND ASN-1246</scope>
</reference>
<reference key="10">
    <citation type="journal article" date="2006" name="Cell">
        <title>Global, in vivo, and site-specific phosphorylation dynamics in signaling networks.</title>
        <authorList>
            <person name="Olsen J.V."/>
            <person name="Blagoev B."/>
            <person name="Gnad F."/>
            <person name="Macek B."/>
            <person name="Kumar C."/>
            <person name="Mortensen P."/>
            <person name="Mann M."/>
        </authorList>
    </citation>
    <scope>PHOSPHORYLATION [LARGE SCALE ANALYSIS] AT SER-2409; SER-2479 AND SER-2484</scope>
    <scope>IDENTIFICATION BY MASS SPECTROMETRY [LARGE SCALE ANALYSIS]</scope>
    <source>
        <tissue>Cervix carcinoma</tissue>
    </source>
</reference>
<reference key="11">
    <citation type="journal article" date="2007" name="Electrophoresis">
        <title>Toward a global characterization of the phosphoproteome in prostate cancer cells: identification of phosphoproteins in the LNCaP cell line.</title>
        <authorList>
            <person name="Giorgianni F."/>
            <person name="Zhao Y."/>
            <person name="Desiderio D.M."/>
            <person name="Beranova-Giorgianni S."/>
        </authorList>
    </citation>
    <scope>PHOSPHORYLATION [LARGE SCALE ANALYSIS] AT SER-2484</scope>
    <scope>IDENTIFICATION BY MASS SPECTROMETRY [LARGE SCALE ANALYSIS]</scope>
    <source>
        <tissue>Prostate cancer</tissue>
    </source>
</reference>
<reference key="12">
    <citation type="journal article" date="2008" name="J. Proteome Res.">
        <title>Combining protein-based IMAC, peptide-based IMAC, and MudPIT for efficient phosphoproteomic analysis.</title>
        <authorList>
            <person name="Cantin G.T."/>
            <person name="Yi W."/>
            <person name="Lu B."/>
            <person name="Park S.K."/>
            <person name="Xu T."/>
            <person name="Lee J.-D."/>
            <person name="Yates J.R. III"/>
        </authorList>
    </citation>
    <scope>PHOSPHORYLATION [LARGE SCALE ANALYSIS] AT SER-2484</scope>
    <scope>IDENTIFICATION BY MASS SPECTROMETRY [LARGE SCALE ANALYSIS]</scope>
    <source>
        <tissue>Cervix carcinoma</tissue>
    </source>
</reference>
<reference key="13">
    <citation type="journal article" date="2008" name="J. Proteome Res.">
        <title>Phosphorylation analysis of primary human T lymphocytes using sequential IMAC and titanium oxide enrichment.</title>
        <authorList>
            <person name="Carrascal M."/>
            <person name="Ovelleiro D."/>
            <person name="Casas V."/>
            <person name="Gay M."/>
            <person name="Abian J."/>
        </authorList>
    </citation>
    <scope>PHOSPHORYLATION [LARGE SCALE ANALYSIS] AT SER-2484</scope>
    <scope>IDENTIFICATION BY MASS SPECTROMETRY [LARGE SCALE ANALYSIS]</scope>
    <source>
        <tissue>T-cell</tissue>
    </source>
</reference>
<reference key="14">
    <citation type="journal article" date="2008" name="Mol. Cell">
        <title>Kinase-selective enrichment enables quantitative phosphoproteomics of the kinome across the cell cycle.</title>
        <authorList>
            <person name="Daub H."/>
            <person name="Olsen J.V."/>
            <person name="Bairlein M."/>
            <person name="Gnad F."/>
            <person name="Oppermann F.S."/>
            <person name="Korner R."/>
            <person name="Greff Z."/>
            <person name="Keri G."/>
            <person name="Stemmann O."/>
            <person name="Mann M."/>
        </authorList>
    </citation>
    <scope>PHOSPHORYLATION [LARGE SCALE ANALYSIS] AT SER-2484</scope>
    <scope>IDENTIFICATION BY MASS SPECTROMETRY [LARGE SCALE ANALYSIS]</scope>
    <source>
        <tissue>Cervix carcinoma</tissue>
    </source>
</reference>
<reference key="15">
    <citation type="journal article" date="2008" name="Proc. Natl. Acad. Sci. U.S.A.">
        <title>A quantitative atlas of mitotic phosphorylation.</title>
        <authorList>
            <person name="Dephoure N."/>
            <person name="Zhou C."/>
            <person name="Villen J."/>
            <person name="Beausoleil S.A."/>
            <person name="Bakalarski C.E."/>
            <person name="Elledge S.J."/>
            <person name="Gygi S.P."/>
        </authorList>
    </citation>
    <scope>PHOSPHORYLATION [LARGE SCALE ANALYSIS] AT SER-2409</scope>
    <scope>IDENTIFICATION BY MASS SPECTROMETRY [LARGE SCALE ANALYSIS]</scope>
    <source>
        <tissue>Cervix carcinoma</tissue>
    </source>
</reference>
<reference key="16">
    <citation type="journal article" date="2008" name="Proteomics">
        <title>Large-scale phosphoproteome analysis of human liver tissue by enrichment and fractionation of phosphopeptides with strong anion exchange chromatography.</title>
        <authorList>
            <person name="Han G."/>
            <person name="Ye M."/>
            <person name="Zhou H."/>
            <person name="Jiang X."/>
            <person name="Feng S."/>
            <person name="Jiang X."/>
            <person name="Tian R."/>
            <person name="Wan D."/>
            <person name="Zou H."/>
            <person name="Gu J."/>
        </authorList>
    </citation>
    <scope>PHOSPHORYLATION [LARGE SCALE ANALYSIS] AT SER-2484</scope>
    <scope>IDENTIFICATION BY MASS SPECTROMETRY [LARGE SCALE ANALYSIS]</scope>
    <source>
        <tissue>Liver</tissue>
    </source>
</reference>
<reference key="17">
    <citation type="journal article" date="2008" name="Traffic">
        <title>Palmitoylation controls recycling in lysosomal sorting and trafficking.</title>
        <authorList>
            <person name="McCormick P.J."/>
            <person name="Dumaresq-Doiron K."/>
            <person name="Pluviose A.S."/>
            <person name="Pichette V."/>
            <person name="Tosato G."/>
            <person name="Lefrancois S."/>
        </authorList>
    </citation>
    <scope>FUNCTION</scope>
    <scope>INTERACTION WITH THE RETROMER COMPLEX</scope>
    <scope>SUBCELLULAR LOCATION</scope>
    <scope>PALMITOYLATION</scope>
</reference>
<reference key="18">
    <citation type="journal article" date="2009" name="Anal. Chem.">
        <title>Lys-N and trypsin cover complementary parts of the phosphoproteome in a refined SCX-based approach.</title>
        <authorList>
            <person name="Gauci S."/>
            <person name="Helbig A.O."/>
            <person name="Slijper M."/>
            <person name="Krijgsveld J."/>
            <person name="Heck A.J."/>
            <person name="Mohammed S."/>
        </authorList>
    </citation>
    <scope>IDENTIFICATION BY MASS SPECTROMETRY [LARGE SCALE ANALYSIS]</scope>
</reference>
<reference key="19">
    <citation type="journal article" date="2009" name="J. Proteome Res.">
        <title>Glycoproteomics analysis of human liver tissue by combination of multiple enzyme digestion and hydrazide chemistry.</title>
        <authorList>
            <person name="Chen R."/>
            <person name="Jiang X."/>
            <person name="Sun D."/>
            <person name="Han G."/>
            <person name="Wang F."/>
            <person name="Ye M."/>
            <person name="Wang L."/>
            <person name="Zou H."/>
        </authorList>
    </citation>
    <scope>GLYCOSYLATION [LARGE SCALE ANALYSIS] AT ASN-626 AND ASN-747</scope>
    <source>
        <tissue>Liver</tissue>
    </source>
</reference>
<reference key="20">
    <citation type="journal article" date="2009" name="Mol. Cell. Proteomics">
        <title>Large-scale proteomics analysis of the human kinome.</title>
        <authorList>
            <person name="Oppermann F.S."/>
            <person name="Gnad F."/>
            <person name="Olsen J.V."/>
            <person name="Hornberger R."/>
            <person name="Greff Z."/>
            <person name="Keri G."/>
            <person name="Mann M."/>
            <person name="Daub H."/>
        </authorList>
    </citation>
    <scope>PHOSPHORYLATION [LARGE SCALE ANALYSIS] AT SER-2484</scope>
    <scope>IDENTIFICATION BY MASS SPECTROMETRY [LARGE SCALE ANALYSIS]</scope>
</reference>
<reference key="21">
    <citation type="journal article" date="2009" name="Sci. Signal.">
        <title>Quantitative phosphoproteomic analysis of T cell receptor signaling reveals system-wide modulation of protein-protein interactions.</title>
        <authorList>
            <person name="Mayya V."/>
            <person name="Lundgren D.H."/>
            <person name="Hwang S.-I."/>
            <person name="Rezaul K."/>
            <person name="Wu L."/>
            <person name="Eng J.K."/>
            <person name="Rodionov V."/>
            <person name="Han D.K."/>
        </authorList>
    </citation>
    <scope>PHOSPHORYLATION [LARGE SCALE ANALYSIS] AT SER-2409; SER-2479 AND SER-2484</scope>
    <scope>IDENTIFICATION BY MASS SPECTROMETRY [LARGE SCALE ANALYSIS]</scope>
    <source>
        <tissue>Leukemic T-cell</tissue>
    </source>
</reference>
<reference key="22">
    <citation type="journal article" date="2009" name="Science">
        <title>Lysine acetylation targets protein complexes and co-regulates major cellular functions.</title>
        <authorList>
            <person name="Choudhary C."/>
            <person name="Kumar C."/>
            <person name="Gnad F."/>
            <person name="Nielsen M.L."/>
            <person name="Rehman M."/>
            <person name="Walther T.C."/>
            <person name="Olsen J.V."/>
            <person name="Mann M."/>
        </authorList>
    </citation>
    <scope>ACETYLATION [LARGE SCALE ANALYSIS] AT LYS-2352</scope>
    <scope>IDENTIFICATION BY MASS SPECTROMETRY [LARGE SCALE ANALYSIS]</scope>
</reference>
<reference key="23">
    <citation type="journal article" date="2010" name="Sci. Signal.">
        <title>Quantitative phosphoproteomics reveals widespread full phosphorylation site occupancy during mitosis.</title>
        <authorList>
            <person name="Olsen J.V."/>
            <person name="Vermeulen M."/>
            <person name="Santamaria A."/>
            <person name="Kumar C."/>
            <person name="Miller M.L."/>
            <person name="Jensen L.J."/>
            <person name="Gnad F."/>
            <person name="Cox J."/>
            <person name="Jensen T.S."/>
            <person name="Nigg E.A."/>
            <person name="Brunak S."/>
            <person name="Mann M."/>
        </authorList>
    </citation>
    <scope>PHOSPHORYLATION [LARGE SCALE ANALYSIS] AT SER-2409; SER-2479 AND SER-2484</scope>
    <scope>IDENTIFICATION BY MASS SPECTROMETRY [LARGE SCALE ANALYSIS]</scope>
    <source>
        <tissue>Cervix carcinoma</tissue>
    </source>
</reference>
<reference key="24">
    <citation type="journal article" date="2011" name="BMC Syst. Biol.">
        <title>Initial characterization of the human central proteome.</title>
        <authorList>
            <person name="Burkard T.R."/>
            <person name="Planyavsky M."/>
            <person name="Kaupe I."/>
            <person name="Breitwieser F.P."/>
            <person name="Buerckstuemmer T."/>
            <person name="Bennett K.L."/>
            <person name="Superti-Furga G."/>
            <person name="Colinge J."/>
        </authorList>
    </citation>
    <scope>IDENTIFICATION BY MASS SPECTROMETRY [LARGE SCALE ANALYSIS]</scope>
</reference>
<reference key="25">
    <citation type="journal article" date="2011" name="Sci. Signal.">
        <title>System-wide temporal characterization of the proteome and phosphoproteome of human embryonic stem cell differentiation.</title>
        <authorList>
            <person name="Rigbolt K.T."/>
            <person name="Prokhorova T.A."/>
            <person name="Akimov V."/>
            <person name="Henningsen J."/>
            <person name="Johansen P.T."/>
            <person name="Kratchmarova I."/>
            <person name="Kassem M."/>
            <person name="Mann M."/>
            <person name="Olsen J.V."/>
            <person name="Blagoev B."/>
        </authorList>
    </citation>
    <scope>PHOSPHORYLATION [LARGE SCALE ANALYSIS] AT SER-2409 AND SER-2484</scope>
    <scope>IDENTIFICATION BY MASS SPECTROMETRY [LARGE SCALE ANALYSIS]</scope>
</reference>
<reference key="26">
    <citation type="journal article" date="2013" name="J. Proteome Res.">
        <title>Toward a comprehensive characterization of a human cancer cell phosphoproteome.</title>
        <authorList>
            <person name="Zhou H."/>
            <person name="Di Palma S."/>
            <person name="Preisinger C."/>
            <person name="Peng M."/>
            <person name="Polat A.N."/>
            <person name="Heck A.J."/>
            <person name="Mohammed S."/>
        </authorList>
    </citation>
    <scope>PHOSPHORYLATION [LARGE SCALE ANALYSIS] AT SER-2409; SER-2479 AND SER-2484</scope>
    <scope>IDENTIFICATION BY MASS SPECTROMETRY [LARGE SCALE ANALYSIS]</scope>
    <source>
        <tissue>Cervix carcinoma</tissue>
        <tissue>Erythroleukemia</tissue>
    </source>
</reference>
<reference key="27">
    <citation type="journal article" date="2014" name="J. Proteomics">
        <title>An enzyme assisted RP-RPLC approach for in-depth analysis of human liver phosphoproteome.</title>
        <authorList>
            <person name="Bian Y."/>
            <person name="Song C."/>
            <person name="Cheng K."/>
            <person name="Dong M."/>
            <person name="Wang F."/>
            <person name="Huang J."/>
            <person name="Sun D."/>
            <person name="Wang L."/>
            <person name="Ye M."/>
            <person name="Zou H."/>
        </authorList>
    </citation>
    <scope>PHOSPHORYLATION [LARGE SCALE ANALYSIS] AT SER-2409; SER-2479 AND SER-2484</scope>
    <scope>IDENTIFICATION BY MASS SPECTROMETRY [LARGE SCALE ANALYSIS]</scope>
    <source>
        <tissue>Liver</tissue>
    </source>
</reference>
<reference key="28">
    <citation type="journal article" date="2015" name="Proteomics">
        <title>N-terminome analysis of the human mitochondrial proteome.</title>
        <authorList>
            <person name="Vaca Jacome A.S."/>
            <person name="Rabilloud T."/>
            <person name="Schaeffer-Reiss C."/>
            <person name="Rompais M."/>
            <person name="Ayoub D."/>
            <person name="Lane L."/>
            <person name="Bairoch A."/>
            <person name="Van Dorsselaer A."/>
            <person name="Carapito C."/>
        </authorList>
    </citation>
    <scope>IDENTIFICATION BY MASS SPECTROMETRY [LARGE SCALE ANALYSIS]</scope>
</reference>
<reference key="29">
    <citation type="journal article" date="2008" name="EMBO J.">
        <title>Structure and functional analysis of the IGF-II/IGF2R interaction.</title>
        <authorList>
            <person name="Brown J."/>
            <person name="Delaine C."/>
            <person name="Zaccheo O.J."/>
            <person name="Siebold C."/>
            <person name="Gilbert R.J."/>
            <person name="van Boxel G."/>
            <person name="Denley A."/>
            <person name="Wallace J.C."/>
            <person name="Hassan A.B."/>
            <person name="Forbes B.E."/>
            <person name="Jones E.Y."/>
        </authorList>
    </citation>
    <scope>X-RAY CRYSTALLOGRAPHY (2.91 ANGSTROMS) OF 1508-2128 ALONE AND IN COMPLEX WITH IGF2</scope>
    <scope>DISULFIDE BONDS</scope>
    <scope>FUNCTION</scope>
</reference>
<comment type="function">
    <text evidence="7 10 11 14">Mediates the transport of phosphorylated lysosomal enzymes from the Golgi complex and the cell surface to lysosomes (PubMed:18817523, PubMed:2963003). Lysosomal enzymes bearing phosphomannosyl residues bind specifically to mannose-6-phosphate receptors in the Golgi apparatus and the resulting receptor-ligand complex is transported to an acidic prelysosomal compartment where the low pH mediates the dissociation of the complex (PubMed:18817523, PubMed:2963003). The receptor is then recycled back to the Golgi for another round of trafficking through its binding to the retromer (PubMed:18817523). This receptor also binds IGF2 (PubMed:18046459). Acts as a positive regulator of T-cell coactivation by binding DPP4 (PubMed:10900005).</text>
</comment>
<comment type="subunit">
    <text evidence="1 7 8 10 18">Binds HA-I and HA-II plasma membrane adapters (By similarity). Interacts with DPP4; the interaction is direct. Binds GGA1, GGA2 and GGA3. Interacts with the heterotrimeric retromer cargo-selective complex (CSC), formed by VPS26 (VPS26A or VPS26B), VPS29 and VPS35; which is involved in retrograde trafficking of the receptor from endosomes to the Golgi apparatus (Probable).</text>
</comment>
<comment type="interaction">
    <interactant intactId="EBI-1048580">
        <id>P11717</id>
    </interactant>
    <interactant intactId="EBI-447141">
        <id>Q9UJY5</id>
        <label>GGA1</label>
    </interactant>
    <organismsDiffer>false</organismsDiffer>
    <experiments>9</experiments>
</comment>
<comment type="interaction">
    <interactant intactId="EBI-1048580">
        <id>P11717</id>
    </interactant>
    <interactant intactId="EBI-447404">
        <id>Q9NZ52</id>
        <label>GGA3</label>
    </interactant>
    <organismsDiffer>false</organismsDiffer>
    <experiments>8</experiments>
</comment>
<comment type="interaction">
    <interactant intactId="EBI-1048580">
        <id>P11717</id>
    </interactant>
    <interactant intactId="EBI-7178764">
        <id>P01344</id>
        <label>IGF2</label>
    </interactant>
    <organismsDiffer>false</organismsDiffer>
    <experiments>17</experiments>
</comment>
<comment type="interaction">
    <interactant intactId="EBI-1048580">
        <id>P11717</id>
    </interactant>
    <interactant intactId="EBI-15658078">
        <id>P01344-1</id>
        <label>IGF2</label>
    </interactant>
    <organismsDiffer>false</organismsDiffer>
    <experiments>2</experiments>
</comment>
<comment type="interaction">
    <interactant intactId="EBI-1048580">
        <id>P11717</id>
    </interactant>
    <interactant intactId="EBI-1048580">
        <id>P11717</id>
        <label>IGF2R</label>
    </interactant>
    <organismsDiffer>false</organismsDiffer>
    <experiments>4</experiments>
</comment>
<comment type="interaction">
    <interactant intactId="EBI-1048580">
        <id>P11717</id>
    </interactant>
    <interactant intactId="EBI-2555014">
        <id>Q6VY07</id>
        <label>PACS1</label>
    </interactant>
    <organismsDiffer>false</organismsDiffer>
    <experiments>2</experiments>
</comment>
<comment type="subcellular location">
    <subcellularLocation>
        <location evidence="11">Golgi apparatus membrane</location>
        <topology evidence="13">Single-pass type I membrane protein</topology>
    </subcellularLocation>
    <subcellularLocation>
        <location evidence="11">Endosome membrane</location>
        <topology evidence="13">Single-pass type I membrane protein</topology>
    </subcellularLocation>
    <text evidence="7 11">Mainly localized in the Golgi at steady state and not detectable in lysosome (PubMed:18817523). Colocalized with DPP4 in internalized cytoplasmic vesicles adjacent to the cell surface (PubMed:10900005).</text>
</comment>
<comment type="domain">
    <text>Contains 15 repeating units of approximately 147 AA harboring four disulfide bonds each. The most highly conserved region within the repeat consists of a stretch of 13 AA that contains cysteines at both ends.</text>
</comment>
<comment type="PTM">
    <text evidence="11">Palmitoylated (PubMed:18817523). Undergoes cysteine S-palmitoylation which promotes interaction with the retromer cargo-selective complex which mediates its retrograde trafficking to the Golgi apparatus (PubMed:18817523).</text>
</comment>
<comment type="similarity">
    <text evidence="17">Belongs to the MRL1/IGF2R family.</text>
</comment>
<comment type="online information" name="Atlas of Genetics and Cytogenetics in Oncology and Haematology">
    <link uri="https://atlasgeneticsoncology.org/gene/380/IGF2R"/>
</comment>
<keyword id="KW-0002">3D-structure</keyword>
<keyword id="KW-0007">Acetylation</keyword>
<keyword id="KW-0903">Direct protein sequencing</keyword>
<keyword id="KW-1015">Disulfide bond</keyword>
<keyword id="KW-0967">Endosome</keyword>
<keyword id="KW-0325">Glycoprotein</keyword>
<keyword id="KW-0333">Golgi apparatus</keyword>
<keyword id="KW-0449">Lipoprotein</keyword>
<keyword id="KW-0472">Membrane</keyword>
<keyword id="KW-0488">Methylation</keyword>
<keyword id="KW-0564">Palmitate</keyword>
<keyword id="KW-0597">Phosphoprotein</keyword>
<keyword id="KW-1267">Proteomics identification</keyword>
<keyword id="KW-0675">Receptor</keyword>
<keyword id="KW-1185">Reference proteome</keyword>
<keyword id="KW-0677">Repeat</keyword>
<keyword id="KW-0732">Signal</keyword>
<keyword id="KW-0812">Transmembrane</keyword>
<keyword id="KW-1133">Transmembrane helix</keyword>
<keyword id="KW-0813">Transport</keyword>
<feature type="signal peptide" evidence="13">
    <location>
        <begin position="1"/>
        <end position="40"/>
    </location>
</feature>
<feature type="chain" id="PRO_0000019229" description="Cation-independent mannose-6-phosphate receptor">
    <location>
        <begin position="41"/>
        <end position="2491"/>
    </location>
</feature>
<feature type="topological domain" description="Lumenal" evidence="13">
    <location>
        <begin position="41"/>
        <end position="2304"/>
    </location>
</feature>
<feature type="transmembrane region" description="Helical" evidence="3">
    <location>
        <begin position="2305"/>
        <end position="2327"/>
    </location>
</feature>
<feature type="topological domain" description="Cytoplasmic" evidence="13">
    <location>
        <begin position="2328"/>
        <end position="2491"/>
    </location>
</feature>
<feature type="domain" description="MRH 1" evidence="5">
    <location>
        <begin position="47"/>
        <end position="163"/>
    </location>
</feature>
<feature type="domain" description="MRH 2" evidence="5">
    <location>
        <begin position="172"/>
        <end position="320"/>
    </location>
</feature>
<feature type="domain" description="MRH 3" evidence="5">
    <location>
        <begin position="326"/>
        <end position="468"/>
    </location>
</feature>
<feature type="domain" description="MRH 4" evidence="5">
    <location>
        <begin position="473"/>
        <end position="619"/>
    </location>
</feature>
<feature type="domain" description="MRH 5" evidence="5">
    <location>
        <begin position="625"/>
        <end position="762"/>
    </location>
</feature>
<feature type="domain" description="MRH 6" evidence="5">
    <location>
        <begin position="765"/>
        <end position="924"/>
    </location>
</feature>
<feature type="domain" description="MRH 7" evidence="5">
    <location>
        <begin position="932"/>
        <end position="1079"/>
    </location>
</feature>
<feature type="domain" description="MRH 8" evidence="5">
    <location>
        <begin position="1082"/>
        <end position="1219"/>
    </location>
</feature>
<feature type="domain" description="MRH 9" evidence="5">
    <location>
        <begin position="1225"/>
        <end position="1363"/>
    </location>
</feature>
<feature type="domain" description="MRH 10" evidence="5">
    <location>
        <begin position="1367"/>
        <end position="1508"/>
    </location>
</feature>
<feature type="domain" description="MRH 11" evidence="5">
    <location>
        <begin position="1514"/>
        <end position="1648"/>
    </location>
</feature>
<feature type="domain" description="MRH 12" evidence="5">
    <location>
        <begin position="1650"/>
        <end position="1797"/>
    </location>
</feature>
<feature type="domain" description="Fibronectin type-II" evidence="4">
    <location>
        <begin position="1802"/>
        <end position="1989"/>
    </location>
</feature>
<feature type="domain" description="MRH 14" evidence="5">
    <location>
        <begin position="1992"/>
        <end position="2127"/>
    </location>
</feature>
<feature type="domain" description="MRH 15" evidence="5">
    <location>
        <begin position="2135"/>
        <end position="2280"/>
    </location>
</feature>
<feature type="region of interest" description="Disordered" evidence="6">
    <location>
        <begin position="2424"/>
        <end position="2491"/>
    </location>
</feature>
<feature type="compositionally biased region" description="Basic and acidic residues" evidence="6">
    <location>
        <begin position="2444"/>
        <end position="2459"/>
    </location>
</feature>
<feature type="compositionally biased region" description="Polar residues" evidence="6">
    <location>
        <begin position="2464"/>
        <end position="2477"/>
    </location>
</feature>
<feature type="compositionally biased region" description="Basic and acidic residues" evidence="6">
    <location>
        <begin position="2479"/>
        <end position="2491"/>
    </location>
</feature>
<feature type="modified residue" description="N6-acetyllysine" evidence="27">
    <location>
        <position position="2352"/>
    </location>
</feature>
<feature type="modified residue" description="Phosphoserine" evidence="19 23 28 29 30 31 32">
    <location>
        <position position="2409"/>
    </location>
</feature>
<feature type="modified residue" description="Omega-N-methylarginine" evidence="2">
    <location>
        <position position="2425"/>
    </location>
</feature>
<feature type="modified residue" description="Phosphoserine" evidence="19 28 29 31 32">
    <location>
        <position position="2479"/>
    </location>
</feature>
<feature type="modified residue" description="Phosphoserine" evidence="19 20 21 22 24 25 26 28 29 30 31 32">
    <location>
        <position position="2484"/>
    </location>
</feature>
<feature type="glycosylation site" description="N-linked (GlcNAc...) asparagine" evidence="9">
    <location>
        <position position="112"/>
    </location>
</feature>
<feature type="glycosylation site" description="N-linked (GlcNAc...) asparagine" evidence="3">
    <location>
        <position position="400"/>
    </location>
</feature>
<feature type="glycosylation site" description="N-linked (GlcNAc...) asparagine" evidence="3">
    <location>
        <position position="435"/>
    </location>
</feature>
<feature type="glycosylation site" description="N-linked (GlcNAc...) asparagine" evidence="3">
    <location>
        <position position="543"/>
    </location>
</feature>
<feature type="glycosylation site" description="N-linked (GlcNAc...) asparagine" evidence="9">
    <location>
        <position position="581"/>
    </location>
</feature>
<feature type="glycosylation site" description="N-linked (GlcNAc...) asparagine" evidence="12">
    <location>
        <position position="626"/>
    </location>
</feature>
<feature type="glycosylation site" description="N-linked (GlcNAc...) asparagine" evidence="9 12">
    <location>
        <position position="747"/>
    </location>
</feature>
<feature type="glycosylation site" description="N-linked (GlcNAc...) asparagine" evidence="3">
    <location>
        <position position="871"/>
    </location>
</feature>
<feature type="glycosylation site" description="N-linked (GlcNAc...) asparagine" evidence="3">
    <location>
        <position position="951"/>
    </location>
</feature>
<feature type="glycosylation site" description="N-linked (GlcNAc...) asparagine" evidence="3">
    <location>
        <position position="957"/>
    </location>
</feature>
<feature type="glycosylation site" description="N-linked (GlcNAc...) asparagine" evidence="3">
    <location>
        <position position="1164"/>
    </location>
</feature>
<feature type="glycosylation site" description="N-linked (GlcNAc...) asparagine" evidence="9">
    <location>
        <position position="1246"/>
    </location>
</feature>
<feature type="glycosylation site" description="N-linked (GlcNAc...) asparagine" evidence="3">
    <location>
        <position position="1312"/>
    </location>
</feature>
<feature type="glycosylation site" description="N-linked (GlcNAc...) asparagine" evidence="3">
    <location>
        <position position="1656"/>
    </location>
</feature>
<feature type="glycosylation site" description="N-linked (GlcNAc...) asparagine" evidence="3">
    <location>
        <position position="1757"/>
    </location>
</feature>
<feature type="glycosylation site" description="N-linked (GlcNAc...) asparagine" evidence="3">
    <location>
        <position position="1816"/>
    </location>
</feature>
<feature type="glycosylation site" description="N-linked (GlcNAc...) asparagine" evidence="3">
    <location>
        <position position="2085"/>
    </location>
</feature>
<feature type="glycosylation site" description="N-linked (GlcNAc...) asparagine" evidence="3">
    <location>
        <position position="2136"/>
    </location>
</feature>
<feature type="disulfide bond" evidence="5">
    <location>
        <begin position="49"/>
        <end position="69"/>
    </location>
</feature>
<feature type="disulfide bond" evidence="5">
    <location>
        <begin position="77"/>
        <end position="84"/>
    </location>
</feature>
<feature type="disulfide bond" evidence="5">
    <location>
        <begin position="117"/>
        <end position="149"/>
    </location>
</feature>
<feature type="disulfide bond" evidence="5">
    <location>
        <begin position="134"/>
        <end position="161"/>
    </location>
</feature>
<feature type="disulfide bond" evidence="5">
    <location>
        <begin position="174"/>
        <end position="212"/>
    </location>
</feature>
<feature type="disulfide bond" evidence="5">
    <location>
        <begin position="228"/>
        <end position="235"/>
    </location>
</feature>
<feature type="disulfide bond" evidence="5">
    <location>
        <begin position="275"/>
        <end position="306"/>
    </location>
</feature>
<feature type="disulfide bond" evidence="5">
    <location>
        <begin position="288"/>
        <end position="318"/>
    </location>
</feature>
<feature type="disulfide bond" evidence="5">
    <location>
        <begin position="328"/>
        <end position="366"/>
    </location>
</feature>
<feature type="disulfide bond" evidence="5">
    <location>
        <begin position="374"/>
        <end position="382"/>
    </location>
</feature>
<feature type="disulfide bond" evidence="5">
    <location>
        <begin position="420"/>
        <end position="454"/>
    </location>
</feature>
<feature type="disulfide bond" evidence="5">
    <location>
        <begin position="434"/>
        <end position="466"/>
    </location>
</feature>
<feature type="disulfide bond" evidence="5">
    <location>
        <begin position="475"/>
        <end position="519"/>
    </location>
</feature>
<feature type="disulfide bond" evidence="5">
    <location>
        <begin position="531"/>
        <end position="538"/>
    </location>
</feature>
<feature type="disulfide bond" evidence="5">
    <location>
        <begin position="572"/>
        <end position="605"/>
    </location>
</feature>
<feature type="disulfide bond" evidence="5">
    <location>
        <begin position="586"/>
        <end position="617"/>
    </location>
</feature>
<feature type="disulfide bond" evidence="5">
    <location>
        <begin position="627"/>
        <end position="664"/>
    </location>
</feature>
<feature type="disulfide bond" evidence="5">
    <location>
        <begin position="672"/>
        <end position="679"/>
    </location>
</feature>
<feature type="disulfide bond" evidence="5">
    <location>
        <begin position="731"/>
        <end position="760"/>
    </location>
</feature>
<feature type="disulfide bond" evidence="5">
    <location>
        <begin position="767"/>
        <end position="814"/>
    </location>
</feature>
<feature type="disulfide bond" evidence="5">
    <location>
        <begin position="823"/>
        <end position="830"/>
    </location>
</feature>
<feature type="disulfide bond" evidence="5">
    <location>
        <begin position="875"/>
        <end position="910"/>
    </location>
</feature>
<feature type="disulfide bond" evidence="5">
    <location>
        <begin position="893"/>
        <end position="922"/>
    </location>
</feature>
<feature type="disulfide bond" evidence="5">
    <location>
        <begin position="934"/>
        <end position="970"/>
    </location>
</feature>
<feature type="disulfide bond" evidence="5">
    <location>
        <begin position="976"/>
        <end position="987"/>
    </location>
</feature>
<feature type="disulfide bond" evidence="5">
    <location>
        <begin position="1042"/>
        <end position="1077"/>
    </location>
</feature>
<feature type="disulfide bond" evidence="5">
    <location>
        <begin position="1084"/>
        <end position="1125"/>
    </location>
</feature>
<feature type="disulfide bond" evidence="5">
    <location>
        <begin position="1134"/>
        <end position="1142"/>
    </location>
</feature>
<feature type="disulfide bond" evidence="5">
    <location>
        <begin position="1177"/>
        <end position="1205"/>
    </location>
</feature>
<feature type="disulfide bond" evidence="5">
    <location>
        <begin position="1190"/>
        <end position="1217"/>
    </location>
</feature>
<feature type="disulfide bond" evidence="5">
    <location>
        <begin position="1227"/>
        <end position="1262"/>
    </location>
</feature>
<feature type="disulfide bond" evidence="5">
    <location>
        <begin position="1270"/>
        <end position="1282"/>
    </location>
</feature>
<feature type="disulfide bond" evidence="5">
    <location>
        <begin position="1319"/>
        <end position="1349"/>
    </location>
</feature>
<feature type="disulfide bond" evidence="5">
    <location>
        <begin position="1333"/>
        <end position="1361"/>
    </location>
</feature>
<feature type="disulfide bond" evidence="5">
    <location>
        <begin position="1369"/>
        <end position="1408"/>
    </location>
</feature>
<feature type="disulfide bond" evidence="5">
    <location>
        <begin position="1420"/>
        <end position="1427"/>
    </location>
</feature>
<feature type="disulfide bond" evidence="5">
    <location>
        <begin position="1461"/>
        <end position="1494"/>
    </location>
</feature>
<feature type="disulfide bond" evidence="5">
    <location>
        <begin position="1476"/>
        <end position="1506"/>
    </location>
</feature>
<feature type="disulfide bond" evidence="5 10">
    <location>
        <begin position="1516"/>
        <end position="1553"/>
    </location>
</feature>
<feature type="disulfide bond" evidence="5 10">
    <location>
        <begin position="1559"/>
        <end position="1566"/>
    </location>
</feature>
<feature type="disulfide bond" evidence="5 10">
    <location>
        <begin position="1598"/>
        <end position="1634"/>
    </location>
</feature>
<feature type="disulfide bond" evidence="5 10">
    <location>
        <begin position="1614"/>
        <end position="1646"/>
    </location>
</feature>
<feature type="disulfide bond" evidence="5 10">
    <location>
        <begin position="1652"/>
        <end position="1695"/>
    </location>
</feature>
<feature type="disulfide bond" evidence="5 10">
    <location>
        <begin position="1706"/>
        <end position="1713"/>
    </location>
</feature>
<feature type="disulfide bond" evidence="5 10">
    <location>
        <begin position="1750"/>
        <end position="1783"/>
    </location>
</feature>
<feature type="disulfide bond" evidence="5 10">
    <location>
        <begin position="1766"/>
        <end position="1795"/>
    </location>
</feature>
<feature type="disulfide bond" evidence="5 10">
    <location>
        <begin position="1804"/>
        <end position="1839"/>
    </location>
</feature>
<feature type="disulfide bond" evidence="5 10">
    <location>
        <begin position="1850"/>
        <end position="1856"/>
    </location>
</feature>
<feature type="disulfide bond" evidence="5 10">
    <location>
        <begin position="1893"/>
        <end position="1975"/>
    </location>
</feature>
<feature type="disulfide bond" evidence="4 10">
    <location>
        <begin position="1903"/>
        <end position="1927"/>
    </location>
</feature>
<feature type="disulfide bond" evidence="4 10">
    <location>
        <begin position="1917"/>
        <end position="1942"/>
    </location>
</feature>
<feature type="disulfide bond" evidence="5 10">
    <location>
        <begin position="1957"/>
        <end position="1987"/>
    </location>
</feature>
<feature type="disulfide bond" evidence="5">
    <location>
        <begin position="1994"/>
        <end position="2029"/>
    </location>
</feature>
<feature type="disulfide bond" evidence="5 10">
    <location>
        <begin position="2039"/>
        <end position="2046"/>
    </location>
</feature>
<feature type="disulfide bond" evidence="5 10">
    <location>
        <begin position="2082"/>
        <end position="2113"/>
    </location>
</feature>
<feature type="disulfide bond" evidence="5 10">
    <location>
        <begin position="2096"/>
        <end position="2125"/>
    </location>
</feature>
<feature type="disulfide bond" evidence="5">
    <location>
        <begin position="2188"/>
        <end position="2194"/>
    </location>
</feature>
<feature type="disulfide bond" evidence="5">
    <location>
        <begin position="2232"/>
        <end position="2266"/>
    </location>
</feature>
<feature type="disulfide bond" evidence="5">
    <location>
        <begin position="2248"/>
        <end position="2278"/>
    </location>
</feature>
<feature type="sequence variant" id="VAR_021304" description="In dbSNP:rs8191704." evidence="16">
    <original>R</original>
    <variation>H</variation>
    <location>
        <position position="91"/>
    </location>
</feature>
<feature type="sequence variant" id="VAR_020470" description="In dbSNP:rs8191746." evidence="16">
    <original>P</original>
    <variation>L</variation>
    <location>
        <position position="203"/>
    </location>
</feature>
<feature type="sequence variant" id="VAR_021305" description="In dbSNP:rs8191753." evidence="16">
    <original>G</original>
    <variation>D</variation>
    <location>
        <position position="231"/>
    </location>
</feature>
<feature type="sequence variant" id="VAR_020471" description="In dbSNP:rs8191754." evidence="16">
    <original>L</original>
    <variation>V</variation>
    <location>
        <position position="252"/>
    </location>
</feature>
<feature type="sequence variant" id="VAR_021306" description="In dbSNP:rs8191758." evidence="16">
    <original>D</original>
    <variation>G</variation>
    <location>
        <position position="273"/>
    </location>
</feature>
<feature type="sequence variant" id="VAR_021307" description="In dbSNP:rs8191776." evidence="16">
    <original>K</original>
    <variation>Q</variation>
    <location>
        <position position="512"/>
    </location>
</feature>
<feature type="sequence variant" id="VAR_020472" description="In dbSNP:rs6413489.">
    <original>R</original>
    <variation>Q</variation>
    <location>
        <position position="529"/>
    </location>
</feature>
<feature type="sequence variant" id="VAR_020473" description="In dbSNP:rs8191797." evidence="16">
    <original>G</original>
    <variation>S</variation>
    <location>
        <position position="604"/>
    </location>
</feature>
<feature type="sequence variant" id="VAR_020474" description="In dbSNP:rs6413491." evidence="16">
    <original>A</original>
    <variation>T</variation>
    <location>
        <position position="724"/>
    </location>
</feature>
<feature type="sequence variant" id="VAR_021308" description="In dbSNP:rs8191808." evidence="16">
    <original>L</original>
    <variation>V</variation>
    <location>
        <position position="817"/>
    </location>
</feature>
<feature type="sequence variant" id="VAR_020475" description="In dbSNP:rs8191819." evidence="16">
    <original>G</original>
    <variation>S</variation>
    <location>
        <position position="856"/>
    </location>
</feature>
<feature type="sequence variant" id="VAR_020476" description="In dbSNP:rs8191842." evidence="16">
    <original>T</original>
    <variation>M</variation>
    <location>
        <position position="1107"/>
    </location>
</feature>
<feature type="sequence variant" id="VAR_021309" description="In dbSNP:rs8191843." evidence="16">
    <original>V</original>
    <variation>I</variation>
    <location>
        <position position="1124"/>
    </location>
</feature>
<feature type="sequence variant" id="VAR_020477" description="In dbSNP:rs8191844." evidence="16">
    <original>T</original>
    <variation>S</variation>
    <location>
        <position position="1184"/>
    </location>
</feature>
<feature type="sequence variant" id="VAR_050428" description="In dbSNP:rs2230043.">
    <original>E</original>
    <variation>A</variation>
    <location>
        <position position="1254"/>
    </location>
</feature>
<feature type="sequence variant" id="VAR_021310" description="In dbSNP:rs8191859." evidence="16">
    <original>G</original>
    <variation>E</variation>
    <location>
        <position position="1315"/>
    </location>
</feature>
<feature type="sequence variant" id="VAR_021311" description="In dbSNP:rs8191860." evidence="16">
    <original>R</original>
    <variation>H</variation>
    <location>
        <position position="1335"/>
    </location>
</feature>
<feature type="sequence variant" id="VAR_050429" description="In dbSNP:rs2230048.">
    <original>T</original>
    <variation>S</variation>
    <location>
        <position position="1395"/>
    </location>
</feature>
<feature type="sequence variant" id="VAR_021312" description="In dbSNP:rs629849." evidence="13 14 15 16">
    <original>R</original>
    <variation>G</variation>
    <location>
        <position position="1619"/>
    </location>
</feature>
<feature type="sequence variant" id="VAR_050430" description="In dbSNP:rs11552587.">
    <original>Q</original>
    <variation>R</variation>
    <location>
        <position position="1696"/>
    </location>
</feature>
<feature type="sequence variant" id="VAR_021313" description="In dbSNP:rs8191904." evidence="16">
    <original>R</original>
    <variation>H</variation>
    <location>
        <position position="1832"/>
    </location>
</feature>
<feature type="sequence variant" id="VAR_021314" description="In dbSNP:rs8191905." evidence="16">
    <original>G</original>
    <variation>D</variation>
    <location>
        <position position="1860"/>
    </location>
</feature>
<feature type="sequence variant" id="VAR_021315" description="In dbSNP:rs8191908." evidence="16">
    <original>I</original>
    <variation>M</variation>
    <location>
        <position position="1908"/>
    </location>
</feature>
<feature type="sequence variant" id="VAR_014722" description="In dbSNP:rs1805075." evidence="16">
    <original>N</original>
    <variation>S</variation>
    <location>
        <position position="2020"/>
    </location>
</feature>
<feature type="sequence variant" id="VAR_021316" description="In dbSNP:rs8191955." evidence="16">
    <original>A</original>
    <variation>V</variation>
    <location>
        <position position="2459"/>
    </location>
</feature>
<feature type="sequence conflict" description="In Ref. 2; AAA59866." evidence="17" ref="2">
    <original>L</original>
    <variation>V</variation>
    <location>
        <position position="254"/>
    </location>
</feature>
<feature type="sequence conflict" description="In Ref. 2; AAA59866." evidence="17" ref="2">
    <original>E</original>
    <variation>K</variation>
    <location>
        <position position="510"/>
    </location>
</feature>
<feature type="sequence conflict" description="In Ref. 1; CAA68395 and 3; AAF16870." evidence="17" ref="1 3">
    <original>H</original>
    <variation>R</variation>
    <location>
        <position position="612"/>
    </location>
</feature>
<feature type="sequence conflict" description="In Ref. 2; AAA59866." evidence="17" ref="2">
    <original>V</original>
    <variation>A</variation>
    <location>
        <position position="845"/>
    </location>
</feature>
<feature type="sequence conflict" description="In Ref. 2; AAA59866." evidence="17" ref="2">
    <original>S</original>
    <variation>N</variation>
    <location>
        <position position="1489"/>
    </location>
</feature>
<feature type="sequence conflict" description="In Ref. 1; CAA68395 and 3; AAF16870." evidence="17" ref="1 3">
    <original>G</original>
    <variation>A</variation>
    <location>
        <position position="1703"/>
    </location>
</feature>
<feature type="sequence conflict" description="In Ref. 2; AAA59866." evidence="17" ref="2">
    <original>I</original>
    <variation>M</variation>
    <location>
        <position position="2026"/>
    </location>
</feature>
<feature type="sequence conflict" description="In Ref. 2; AAA59866." evidence="17" ref="2">
    <original>T</original>
    <variation>M</variation>
    <location>
        <position position="2075"/>
    </location>
</feature>
<feature type="sequence conflict" description="In Ref. 2; AAA59866." evidence="17" ref="2">
    <original>K</original>
    <variation>N</variation>
    <location>
        <position position="2156"/>
    </location>
</feature>
<feature type="sequence conflict" description="In Ref. 2; AAA59866." evidence="17" ref="2">
    <original>A</original>
    <variation>E</variation>
    <location>
        <position position="2160"/>
    </location>
</feature>
<feature type="sequence conflict" description="In Ref. 2; AAA59866." evidence="17" ref="2">
    <original>Q</original>
    <variation>L</variation>
    <location>
        <position position="2176"/>
    </location>
</feature>
<feature type="sequence conflict" description="In Ref. 2; AAA59866." evidence="17" ref="2">
    <original>E</original>
    <variation>K</variation>
    <location>
        <position position="2330"/>
    </location>
</feature>
<feature type="sequence conflict" description="In Ref. 2; AAA59866." evidence="17" ref="2">
    <original>V</original>
    <variation>M</variation>
    <location>
        <position position="2335"/>
    </location>
</feature>
<feature type="sequence conflict" description="In Ref. 2; AAA59866." evidence="17" ref="2">
    <original>T</original>
    <variation>S</variation>
    <location>
        <position position="2341"/>
    </location>
</feature>
<feature type="sequence conflict" description="In Ref. 2; AAA59866." evidence="17" ref="2">
    <original>E</original>
    <variation>T</variation>
    <location>
        <position position="2410"/>
    </location>
</feature>
<feature type="helix" evidence="41">
    <location>
        <begin position="46"/>
        <end position="48"/>
    </location>
</feature>
<feature type="strand" evidence="41">
    <location>
        <begin position="53"/>
        <end position="57"/>
    </location>
</feature>
<feature type="turn" evidence="41">
    <location>
        <begin position="58"/>
        <end position="61"/>
    </location>
</feature>
<feature type="strand" evidence="41">
    <location>
        <begin position="62"/>
        <end position="66"/>
    </location>
</feature>
<feature type="strand" evidence="41">
    <location>
        <begin position="68"/>
        <end position="70"/>
    </location>
</feature>
<feature type="turn" evidence="41">
    <location>
        <begin position="75"/>
        <end position="77"/>
    </location>
</feature>
<feature type="strand" evidence="41">
    <location>
        <begin position="81"/>
        <end position="85"/>
    </location>
</feature>
<feature type="turn" evidence="41">
    <location>
        <begin position="88"/>
        <end position="91"/>
    </location>
</feature>
<feature type="strand" evidence="41">
    <location>
        <begin position="94"/>
        <end position="105"/>
    </location>
</feature>
<feature type="strand" evidence="41">
    <location>
        <begin position="108"/>
        <end position="112"/>
    </location>
</feature>
<feature type="strand" evidence="41">
    <location>
        <begin position="127"/>
        <end position="134"/>
    </location>
</feature>
<feature type="strand" evidence="41">
    <location>
        <begin position="141"/>
        <end position="146"/>
    </location>
</feature>
<feature type="strand" evidence="41">
    <location>
        <begin position="148"/>
        <end position="157"/>
    </location>
</feature>
<feature type="helix" evidence="41">
    <location>
        <begin position="158"/>
        <end position="160"/>
    </location>
</feature>
<feature type="helix" evidence="40">
    <location>
        <begin position="164"/>
        <end position="166"/>
    </location>
</feature>
<feature type="strand" evidence="41">
    <location>
        <begin position="169"/>
        <end position="171"/>
    </location>
</feature>
<feature type="helix" evidence="41">
    <location>
        <begin position="187"/>
        <end position="189"/>
    </location>
</feature>
<feature type="strand" evidence="41">
    <location>
        <begin position="192"/>
        <end position="194"/>
    </location>
</feature>
<feature type="strand" evidence="41">
    <location>
        <begin position="196"/>
        <end position="199"/>
    </location>
</feature>
<feature type="strand" evidence="41">
    <location>
        <begin position="206"/>
        <end position="209"/>
    </location>
</feature>
<feature type="strand" evidence="41">
    <location>
        <begin position="211"/>
        <end position="213"/>
    </location>
</feature>
<feature type="strand" evidence="41">
    <location>
        <begin position="218"/>
        <end position="220"/>
    </location>
</feature>
<feature type="helix" evidence="40">
    <location>
        <begin position="224"/>
        <end position="227"/>
    </location>
</feature>
<feature type="strand" evidence="41">
    <location>
        <begin position="233"/>
        <end position="240"/>
    </location>
</feature>
<feature type="strand" evidence="41">
    <location>
        <begin position="242"/>
        <end position="247"/>
    </location>
</feature>
<feature type="strand" evidence="41">
    <location>
        <begin position="253"/>
        <end position="255"/>
    </location>
</feature>
<feature type="turn" evidence="41">
    <location>
        <begin position="256"/>
        <end position="258"/>
    </location>
</feature>
<feature type="strand" evidence="41">
    <location>
        <begin position="259"/>
        <end position="265"/>
    </location>
</feature>
<feature type="turn" evidence="41">
    <location>
        <begin position="273"/>
        <end position="277"/>
    </location>
</feature>
<feature type="strand" evidence="41">
    <location>
        <begin position="281"/>
        <end position="287"/>
    </location>
</feature>
<feature type="strand" evidence="41">
    <location>
        <begin position="291"/>
        <end position="293"/>
    </location>
</feature>
<feature type="strand" evidence="41">
    <location>
        <begin position="299"/>
        <end position="302"/>
    </location>
</feature>
<feature type="helix" evidence="41">
    <location>
        <begin position="304"/>
        <end position="306"/>
    </location>
</feature>
<feature type="strand" evidence="41">
    <location>
        <begin position="307"/>
        <end position="313"/>
    </location>
</feature>
<feature type="helix" evidence="41">
    <location>
        <begin position="315"/>
        <end position="317"/>
    </location>
</feature>
<feature type="strand" evidence="41">
    <location>
        <begin position="322"/>
        <end position="329"/>
    </location>
</feature>
<feature type="helix" evidence="40">
    <location>
        <begin position="342"/>
        <end position="344"/>
    </location>
</feature>
<feature type="strand" evidence="40">
    <location>
        <begin position="352"/>
        <end position="355"/>
    </location>
</feature>
<feature type="strand" evidence="41">
    <location>
        <begin position="357"/>
        <end position="363"/>
    </location>
</feature>
<feature type="strand" evidence="41">
    <location>
        <begin position="380"/>
        <end position="385"/>
    </location>
</feature>
<feature type="strand" evidence="41">
    <location>
        <begin position="392"/>
        <end position="394"/>
    </location>
</feature>
<feature type="strand" evidence="41">
    <location>
        <begin position="398"/>
        <end position="406"/>
    </location>
</feature>
<feature type="strand" evidence="41">
    <location>
        <begin position="409"/>
        <end position="414"/>
    </location>
</feature>
<feature type="strand" evidence="41">
    <location>
        <begin position="421"/>
        <end position="423"/>
    </location>
</feature>
<feature type="strand" evidence="41">
    <location>
        <begin position="427"/>
        <end position="434"/>
    </location>
</feature>
<feature type="turn" evidence="40">
    <location>
        <begin position="440"/>
        <end position="443"/>
    </location>
</feature>
<feature type="strand" evidence="41">
    <location>
        <begin position="444"/>
        <end position="452"/>
    </location>
</feature>
<feature type="strand" evidence="41">
    <location>
        <begin position="455"/>
        <end position="462"/>
    </location>
</feature>
<feature type="helix" evidence="41">
    <location>
        <begin position="463"/>
        <end position="465"/>
    </location>
</feature>
<feature type="strand" evidence="40">
    <location>
        <begin position="475"/>
        <end position="479"/>
    </location>
</feature>
<feature type="strand" evidence="40">
    <location>
        <begin position="482"/>
        <end position="485"/>
    </location>
</feature>
<feature type="turn" evidence="40">
    <location>
        <begin position="487"/>
        <end position="489"/>
    </location>
</feature>
<feature type="strand" evidence="40">
    <location>
        <begin position="518"/>
        <end position="520"/>
    </location>
</feature>
<feature type="strand" evidence="40">
    <location>
        <begin position="559"/>
        <end position="566"/>
    </location>
</feature>
<feature type="strand" evidence="40">
    <location>
        <begin position="580"/>
        <end position="586"/>
    </location>
</feature>
<feature type="strand" evidence="40">
    <location>
        <begin position="596"/>
        <end position="599"/>
    </location>
</feature>
<feature type="strand" evidence="40">
    <location>
        <begin position="607"/>
        <end position="613"/>
    </location>
</feature>
<feature type="helix" evidence="40">
    <location>
        <begin position="614"/>
        <end position="616"/>
    </location>
</feature>
<feature type="strand" evidence="41">
    <location>
        <begin position="626"/>
        <end position="630"/>
    </location>
</feature>
<feature type="turn" evidence="41">
    <location>
        <begin position="632"/>
        <end position="634"/>
    </location>
</feature>
<feature type="strand" evidence="41">
    <location>
        <begin position="637"/>
        <end position="639"/>
    </location>
</feature>
<feature type="helix" evidence="41">
    <location>
        <begin position="641"/>
        <end position="643"/>
    </location>
</feature>
<feature type="strand" evidence="41">
    <location>
        <begin position="650"/>
        <end position="653"/>
    </location>
</feature>
<feature type="strand" evidence="41">
    <location>
        <begin position="655"/>
        <end position="661"/>
    </location>
</feature>
<feature type="strand" evidence="41">
    <location>
        <begin position="663"/>
        <end position="665"/>
    </location>
</feature>
<feature type="strand" evidence="41">
    <location>
        <begin position="670"/>
        <end position="672"/>
    </location>
</feature>
<feature type="strand" evidence="41">
    <location>
        <begin position="676"/>
        <end position="682"/>
    </location>
</feature>
<feature type="turn" evidence="41">
    <location>
        <begin position="683"/>
        <end position="685"/>
    </location>
</feature>
<feature type="strand" evidence="41">
    <location>
        <begin position="688"/>
        <end position="693"/>
    </location>
</feature>
<feature type="strand" evidence="41">
    <location>
        <begin position="699"/>
        <end position="701"/>
    </location>
</feature>
<feature type="strand" evidence="41">
    <location>
        <begin position="704"/>
        <end position="709"/>
    </location>
</feature>
<feature type="strand" evidence="41">
    <location>
        <begin position="725"/>
        <end position="731"/>
    </location>
</feature>
<feature type="turn" evidence="41">
    <location>
        <begin position="733"/>
        <end position="737"/>
    </location>
</feature>
<feature type="strand" evidence="41">
    <location>
        <begin position="740"/>
        <end position="743"/>
    </location>
</feature>
<feature type="strand" evidence="41">
    <location>
        <begin position="751"/>
        <end position="756"/>
    </location>
</feature>
<feature type="helix" evidence="41">
    <location>
        <begin position="757"/>
        <end position="759"/>
    </location>
</feature>
<feature type="strand" evidence="44">
    <location>
        <begin position="935"/>
        <end position="937"/>
    </location>
</feature>
<feature type="turn" evidence="44">
    <location>
        <begin position="939"/>
        <end position="941"/>
    </location>
</feature>
<feature type="strand" evidence="44">
    <location>
        <begin position="944"/>
        <end position="946"/>
    </location>
</feature>
<feature type="helix" evidence="44">
    <location>
        <begin position="948"/>
        <end position="950"/>
    </location>
</feature>
<feature type="strand" evidence="44">
    <location>
        <begin position="956"/>
        <end position="959"/>
    </location>
</feature>
<feature type="strand" evidence="44">
    <location>
        <begin position="961"/>
        <end position="967"/>
    </location>
</feature>
<feature type="strand" evidence="44">
    <location>
        <begin position="969"/>
        <end position="971"/>
    </location>
</feature>
<feature type="strand" evidence="44">
    <location>
        <begin position="979"/>
        <end position="982"/>
    </location>
</feature>
<feature type="strand" evidence="44">
    <location>
        <begin position="985"/>
        <end position="989"/>
    </location>
</feature>
<feature type="strand" evidence="44">
    <location>
        <begin position="1002"/>
        <end position="1005"/>
    </location>
</feature>
<feature type="strand" evidence="44">
    <location>
        <begin position="1007"/>
        <end position="1013"/>
    </location>
</feature>
<feature type="strand" evidence="44">
    <location>
        <begin position="1019"/>
        <end position="1029"/>
    </location>
</feature>
<feature type="strand" evidence="44">
    <location>
        <begin position="1032"/>
        <end position="1042"/>
    </location>
</feature>
<feature type="strand" evidence="44">
    <location>
        <begin position="1047"/>
        <end position="1059"/>
    </location>
</feature>
<feature type="helix" evidence="44">
    <location>
        <begin position="1060"/>
        <end position="1062"/>
    </location>
</feature>
<feature type="strand" evidence="44">
    <location>
        <begin position="1064"/>
        <end position="1074"/>
    </location>
</feature>
<feature type="strand" evidence="43">
    <location>
        <begin position="1085"/>
        <end position="1087"/>
    </location>
</feature>
<feature type="strand" evidence="43">
    <location>
        <begin position="1093"/>
        <end position="1095"/>
    </location>
</feature>
<feature type="helix" evidence="43">
    <location>
        <begin position="1097"/>
        <end position="1099"/>
    </location>
</feature>
<feature type="strand" evidence="43">
    <location>
        <begin position="1102"/>
        <end position="1104"/>
    </location>
</feature>
<feature type="strand" evidence="44">
    <location>
        <begin position="1106"/>
        <end position="1111"/>
    </location>
</feature>
<feature type="strand" evidence="44">
    <location>
        <begin position="1113"/>
        <end position="1115"/>
    </location>
</feature>
<feature type="strand" evidence="43">
    <location>
        <begin position="1116"/>
        <end position="1122"/>
    </location>
</feature>
<feature type="strand" evidence="43">
    <location>
        <begin position="1124"/>
        <end position="1126"/>
    </location>
</feature>
<feature type="turn" evidence="44">
    <location>
        <begin position="1136"/>
        <end position="1138"/>
    </location>
</feature>
<feature type="strand" evidence="43">
    <location>
        <begin position="1139"/>
        <end position="1145"/>
    </location>
</feature>
<feature type="strand" evidence="43">
    <location>
        <begin position="1148"/>
        <end position="1151"/>
    </location>
</feature>
<feature type="strand" evidence="43">
    <location>
        <begin position="1168"/>
        <end position="1172"/>
    </location>
</feature>
<feature type="strand" evidence="43">
    <location>
        <begin position="1175"/>
        <end position="1177"/>
    </location>
</feature>
<feature type="strand" evidence="43">
    <location>
        <begin position="1183"/>
        <end position="1190"/>
    </location>
</feature>
<feature type="strand" evidence="43">
    <location>
        <begin position="1198"/>
        <end position="1203"/>
    </location>
</feature>
<feature type="strand" evidence="43">
    <location>
        <begin position="1206"/>
        <end position="1213"/>
    </location>
</feature>
<feature type="helix" evidence="43">
    <location>
        <begin position="1214"/>
        <end position="1216"/>
    </location>
</feature>
<feature type="strand" evidence="44">
    <location>
        <begin position="1221"/>
        <end position="1224"/>
    </location>
</feature>
<feature type="strand" evidence="42">
    <location>
        <begin position="1228"/>
        <end position="1230"/>
    </location>
</feature>
<feature type="turn" evidence="42">
    <location>
        <begin position="1232"/>
        <end position="1234"/>
    </location>
</feature>
<feature type="strand" evidence="42">
    <location>
        <begin position="1237"/>
        <end position="1239"/>
    </location>
</feature>
<feature type="helix" evidence="42">
    <location>
        <begin position="1241"/>
        <end position="1244"/>
    </location>
</feature>
<feature type="strand" evidence="42">
    <location>
        <begin position="1248"/>
        <end position="1252"/>
    </location>
</feature>
<feature type="strand" evidence="42">
    <location>
        <begin position="1255"/>
        <end position="1259"/>
    </location>
</feature>
<feature type="strand" evidence="42">
    <location>
        <begin position="1279"/>
        <end position="1285"/>
    </location>
</feature>
<feature type="strand" evidence="42">
    <location>
        <begin position="1287"/>
        <end position="1289"/>
    </location>
</feature>
<feature type="strand" evidence="42">
    <location>
        <begin position="1291"/>
        <end position="1297"/>
    </location>
</feature>
<feature type="strand" evidence="42">
    <location>
        <begin position="1303"/>
        <end position="1305"/>
    </location>
</feature>
<feature type="strand" evidence="42">
    <location>
        <begin position="1308"/>
        <end position="1313"/>
    </location>
</feature>
<feature type="strand" evidence="42">
    <location>
        <begin position="1317"/>
        <end position="1319"/>
    </location>
</feature>
<feature type="turn" evidence="42">
    <location>
        <begin position="1320"/>
        <end position="1322"/>
    </location>
</feature>
<feature type="strand" evidence="42">
    <location>
        <begin position="1326"/>
        <end position="1332"/>
    </location>
</feature>
<feature type="strand" evidence="42">
    <location>
        <begin position="1335"/>
        <end position="1337"/>
    </location>
</feature>
<feature type="strand" evidence="42">
    <location>
        <begin position="1341"/>
        <end position="1345"/>
    </location>
</feature>
<feature type="strand" evidence="42">
    <location>
        <begin position="1350"/>
        <end position="1357"/>
    </location>
</feature>
<feature type="helix" evidence="42">
    <location>
        <begin position="1358"/>
        <end position="1360"/>
    </location>
</feature>
<feature type="strand" evidence="42">
    <location>
        <begin position="1370"/>
        <end position="1372"/>
    </location>
</feature>
<feature type="strand" evidence="42">
    <location>
        <begin position="1378"/>
        <end position="1380"/>
    </location>
</feature>
<feature type="helix" evidence="42">
    <location>
        <begin position="1382"/>
        <end position="1384"/>
    </location>
</feature>
<feature type="strand" evidence="42">
    <location>
        <begin position="1387"/>
        <end position="1389"/>
    </location>
</feature>
<feature type="strand" evidence="42">
    <location>
        <begin position="1402"/>
        <end position="1405"/>
    </location>
</feature>
<feature type="strand" evidence="42">
    <location>
        <begin position="1407"/>
        <end position="1409"/>
    </location>
</feature>
<feature type="strand" evidence="42">
    <location>
        <begin position="1415"/>
        <end position="1418"/>
    </location>
</feature>
<feature type="strand" evidence="42">
    <location>
        <begin position="1425"/>
        <end position="1433"/>
    </location>
</feature>
<feature type="strand" evidence="42">
    <location>
        <begin position="1445"/>
        <end position="1447"/>
    </location>
</feature>
<feature type="strand" evidence="42">
    <location>
        <begin position="1450"/>
        <end position="1456"/>
    </location>
</feature>
<feature type="strand" evidence="42">
    <location>
        <begin position="1464"/>
        <end position="1467"/>
    </location>
</feature>
<feature type="strand" evidence="42">
    <location>
        <begin position="1469"/>
        <end position="1476"/>
    </location>
</feature>
<feature type="strand" evidence="42">
    <location>
        <begin position="1486"/>
        <end position="1491"/>
    </location>
</feature>
<feature type="turn" evidence="42">
    <location>
        <begin position="1492"/>
        <end position="1494"/>
    </location>
</feature>
<feature type="strand" evidence="42">
    <location>
        <begin position="1495"/>
        <end position="1502"/>
    </location>
</feature>
<feature type="helix" evidence="42">
    <location>
        <begin position="1503"/>
        <end position="1505"/>
    </location>
</feature>
<feature type="strand" evidence="38">
    <location>
        <begin position="1512"/>
        <end position="1514"/>
    </location>
</feature>
<feature type="strand" evidence="33">
    <location>
        <begin position="1517"/>
        <end position="1519"/>
    </location>
</feature>
<feature type="turn" evidence="33">
    <location>
        <begin position="1521"/>
        <end position="1523"/>
    </location>
</feature>
<feature type="strand" evidence="33">
    <location>
        <begin position="1526"/>
        <end position="1528"/>
    </location>
</feature>
<feature type="helix" evidence="33">
    <location>
        <begin position="1530"/>
        <end position="1532"/>
    </location>
</feature>
<feature type="strand" evidence="33">
    <location>
        <begin position="1533"/>
        <end position="1536"/>
    </location>
</feature>
<feature type="strand" evidence="33">
    <location>
        <begin position="1538"/>
        <end position="1542"/>
    </location>
</feature>
<feature type="turn" evidence="33">
    <location>
        <begin position="1543"/>
        <end position="1545"/>
    </location>
</feature>
<feature type="strand" evidence="33">
    <location>
        <begin position="1546"/>
        <end position="1550"/>
    </location>
</feature>
<feature type="strand" evidence="33">
    <location>
        <begin position="1552"/>
        <end position="1554"/>
    </location>
</feature>
<feature type="strand" evidence="44">
    <location>
        <begin position="1557"/>
        <end position="1560"/>
    </location>
</feature>
<feature type="strand" evidence="33">
    <location>
        <begin position="1563"/>
        <end position="1567"/>
    </location>
</feature>
<feature type="turn" evidence="33">
    <location>
        <begin position="1568"/>
        <end position="1570"/>
    </location>
</feature>
<feature type="strand" evidence="38">
    <location>
        <begin position="1573"/>
        <end position="1576"/>
    </location>
</feature>
<feature type="strand" evidence="33">
    <location>
        <begin position="1582"/>
        <end position="1584"/>
    </location>
</feature>
<feature type="strand" evidence="33">
    <location>
        <begin position="1587"/>
        <end position="1592"/>
    </location>
</feature>
<feature type="strand" evidence="35">
    <location>
        <begin position="1596"/>
        <end position="1598"/>
    </location>
</feature>
<feature type="strand" evidence="33">
    <location>
        <begin position="1599"/>
        <end position="1601"/>
    </location>
</feature>
<feature type="strand" evidence="33">
    <location>
        <begin position="1607"/>
        <end position="1614"/>
    </location>
</feature>
<feature type="strand" evidence="35">
    <location>
        <begin position="1616"/>
        <end position="1618"/>
    </location>
</feature>
<feature type="strand" evidence="33">
    <location>
        <begin position="1625"/>
        <end position="1630"/>
    </location>
</feature>
<feature type="turn" evidence="33">
    <location>
        <begin position="1631"/>
        <end position="1634"/>
    </location>
</feature>
<feature type="strand" evidence="33">
    <location>
        <begin position="1635"/>
        <end position="1642"/>
    </location>
</feature>
<feature type="helix" evidence="33">
    <location>
        <begin position="1643"/>
        <end position="1645"/>
    </location>
</feature>
<feature type="turn" evidence="34">
    <location>
        <begin position="1649"/>
        <end position="1651"/>
    </location>
</feature>
<feature type="strand" evidence="37">
    <location>
        <begin position="1653"/>
        <end position="1656"/>
    </location>
</feature>
<feature type="strand" evidence="37">
    <location>
        <begin position="1659"/>
        <end position="1662"/>
    </location>
</feature>
<feature type="helix" evidence="37">
    <location>
        <begin position="1664"/>
        <end position="1666"/>
    </location>
</feature>
<feature type="strand" evidence="37">
    <location>
        <begin position="1669"/>
        <end position="1671"/>
    </location>
</feature>
<feature type="strand" evidence="37">
    <location>
        <begin position="1673"/>
        <end position="1675"/>
    </location>
</feature>
<feature type="strand" evidence="37">
    <location>
        <begin position="1690"/>
        <end position="1692"/>
    </location>
</feature>
<feature type="strand" evidence="37">
    <location>
        <begin position="1694"/>
        <end position="1696"/>
    </location>
</feature>
<feature type="strand" evidence="37">
    <location>
        <begin position="1711"/>
        <end position="1714"/>
    </location>
</feature>
<feature type="strand" evidence="37">
    <location>
        <begin position="1717"/>
        <end position="1719"/>
    </location>
</feature>
<feature type="strand" evidence="37">
    <location>
        <begin position="1722"/>
        <end position="1727"/>
    </location>
</feature>
<feature type="strand" evidence="36">
    <location>
        <begin position="1732"/>
        <end position="1734"/>
    </location>
</feature>
<feature type="strand" evidence="37">
    <location>
        <begin position="1735"/>
        <end position="1737"/>
    </location>
</feature>
<feature type="strand" evidence="37">
    <location>
        <begin position="1743"/>
        <end position="1745"/>
    </location>
</feature>
<feature type="strand" evidence="37">
    <location>
        <begin position="1759"/>
        <end position="1766"/>
    </location>
</feature>
<feature type="strand" evidence="37">
    <location>
        <begin position="1775"/>
        <end position="1777"/>
    </location>
</feature>
<feature type="turn" evidence="37">
    <location>
        <begin position="1781"/>
        <end position="1783"/>
    </location>
</feature>
<feature type="strand" evidence="37">
    <location>
        <begin position="1784"/>
        <end position="1791"/>
    </location>
</feature>
<feature type="helix" evidence="37">
    <location>
        <begin position="1792"/>
        <end position="1794"/>
    </location>
</feature>
<feature type="turn" evidence="37">
    <location>
        <begin position="1801"/>
        <end position="1804"/>
    </location>
</feature>
<feature type="strand" evidence="37">
    <location>
        <begin position="1805"/>
        <end position="1807"/>
    </location>
</feature>
<feature type="turn" evidence="37">
    <location>
        <begin position="1809"/>
        <end position="1811"/>
    </location>
</feature>
<feature type="strand" evidence="37">
    <location>
        <begin position="1814"/>
        <end position="1816"/>
    </location>
</feature>
<feature type="helix" evidence="37">
    <location>
        <begin position="1818"/>
        <end position="1821"/>
    </location>
</feature>
<feature type="strand" evidence="37">
    <location>
        <begin position="1825"/>
        <end position="1829"/>
    </location>
</feature>
<feature type="strand" evidence="37">
    <location>
        <begin position="1832"/>
        <end position="1836"/>
    </location>
</feature>
<feature type="strand" evidence="37">
    <location>
        <begin position="1838"/>
        <end position="1840"/>
    </location>
</feature>
<feature type="turn" evidence="37">
    <location>
        <begin position="1845"/>
        <end position="1847"/>
    </location>
</feature>
<feature type="strand" evidence="37">
    <location>
        <begin position="1850"/>
        <end position="1858"/>
    </location>
</feature>
<feature type="strand" evidence="37">
    <location>
        <begin position="1863"/>
        <end position="1876"/>
    </location>
</feature>
<feature type="turn" evidence="37">
    <location>
        <begin position="1878"/>
        <end position="1880"/>
    </location>
</feature>
<feature type="strand" evidence="37">
    <location>
        <begin position="1883"/>
        <end position="1888"/>
    </location>
</feature>
<feature type="strand" evidence="37">
    <location>
        <begin position="1905"/>
        <end position="1909"/>
    </location>
</feature>
<feature type="strand" evidence="37">
    <location>
        <begin position="1912"/>
        <end position="1916"/>
    </location>
</feature>
<feature type="strand" evidence="37">
    <location>
        <begin position="1920"/>
        <end position="1924"/>
    </location>
</feature>
<feature type="strand" evidence="37">
    <location>
        <begin position="1926"/>
        <end position="1932"/>
    </location>
</feature>
<feature type="helix" evidence="37">
    <location>
        <begin position="1933"/>
        <end position="1936"/>
    </location>
</feature>
<feature type="strand" evidence="37">
    <location>
        <begin position="1939"/>
        <end position="1943"/>
    </location>
</feature>
<feature type="strand" evidence="37">
    <location>
        <begin position="1950"/>
        <end position="1957"/>
    </location>
</feature>
<feature type="strand" evidence="37">
    <location>
        <begin position="1967"/>
        <end position="1972"/>
    </location>
</feature>
<feature type="turn" evidence="37">
    <location>
        <begin position="1973"/>
        <end position="1975"/>
    </location>
</feature>
<feature type="strand" evidence="37">
    <location>
        <begin position="1976"/>
        <end position="1984"/>
    </location>
</feature>
<feature type="strand" evidence="37">
    <location>
        <begin position="1995"/>
        <end position="2000"/>
    </location>
</feature>
<feature type="strand" evidence="37">
    <location>
        <begin position="2002"/>
        <end position="2004"/>
    </location>
</feature>
<feature type="helix" evidence="37">
    <location>
        <begin position="2005"/>
        <end position="2007"/>
    </location>
</feature>
<feature type="strand" evidence="37">
    <location>
        <begin position="2011"/>
        <end position="2013"/>
    </location>
</feature>
<feature type="strand" evidence="37">
    <location>
        <begin position="2015"/>
        <end position="2019"/>
    </location>
</feature>
<feature type="strand" evidence="37">
    <location>
        <begin position="2022"/>
        <end position="2026"/>
    </location>
</feature>
<feature type="strand" evidence="37">
    <location>
        <begin position="2043"/>
        <end position="2048"/>
    </location>
</feature>
<feature type="strand" evidence="37">
    <location>
        <begin position="2054"/>
        <end position="2059"/>
    </location>
</feature>
<feature type="helix" evidence="37">
    <location>
        <begin position="2060"/>
        <end position="2062"/>
    </location>
</feature>
<feature type="strand" evidence="37">
    <location>
        <begin position="2064"/>
        <end position="2068"/>
    </location>
</feature>
<feature type="strand" evidence="37">
    <location>
        <begin position="2071"/>
        <end position="2076"/>
    </location>
</feature>
<feature type="strand" evidence="37">
    <location>
        <begin position="2089"/>
        <end position="2096"/>
    </location>
</feature>
<feature type="strand" evidence="37">
    <location>
        <begin position="2098"/>
        <end position="2109"/>
    </location>
</feature>
<feature type="turn" evidence="37">
    <location>
        <begin position="2110"/>
        <end position="2113"/>
    </location>
</feature>
<feature type="strand" evidence="37">
    <location>
        <begin position="2114"/>
        <end position="2121"/>
    </location>
</feature>
<feature type="helix" evidence="37">
    <location>
        <begin position="2122"/>
        <end position="2124"/>
    </location>
</feature>
<feature type="strand" evidence="39">
    <location>
        <begin position="2350"/>
        <end position="2355"/>
    </location>
</feature>
<feature type="strand" evidence="39">
    <location>
        <begin position="2368"/>
        <end position="2373"/>
    </location>
</feature>